<protein>
    <recommendedName>
        <fullName evidence="60">Nibrin</fullName>
    </recommendedName>
    <alternativeName>
        <fullName evidence="61">Cell cycle regulatory protein p95</fullName>
    </alternativeName>
    <alternativeName>
        <fullName evidence="60">Nijmegen breakage syndrome protein 1</fullName>
        <shortName evidence="59">hNbs1</shortName>
    </alternativeName>
</protein>
<organism>
    <name type="scientific">Homo sapiens</name>
    <name type="common">Human</name>
    <dbReference type="NCBI Taxonomy" id="9606"/>
    <lineage>
        <taxon>Eukaryota</taxon>
        <taxon>Metazoa</taxon>
        <taxon>Chordata</taxon>
        <taxon>Craniata</taxon>
        <taxon>Vertebrata</taxon>
        <taxon>Euteleostomi</taxon>
        <taxon>Mammalia</taxon>
        <taxon>Eutheria</taxon>
        <taxon>Euarchontoglires</taxon>
        <taxon>Primates</taxon>
        <taxon>Haplorrhini</taxon>
        <taxon>Catarrhini</taxon>
        <taxon>Hominidae</taxon>
        <taxon>Homo</taxon>
    </lineage>
</organism>
<gene>
    <name evidence="64" type="primary">NBN</name>
    <name type="synonym">NBS</name>
    <name evidence="60" type="synonym">NBS1</name>
    <name evidence="61" type="synonym">P95</name>
</gene>
<feature type="chain" id="PRO_0000231043" description="Nibrin">
    <location>
        <begin position="1"/>
        <end position="754"/>
    </location>
</feature>
<feature type="domain" description="FHA" evidence="2">
    <location>
        <begin position="24"/>
        <end position="83"/>
    </location>
</feature>
<feature type="domain" description="BRCT 1" evidence="63">
    <location>
        <begin position="105"/>
        <end position="181"/>
    </location>
</feature>
<feature type="domain" description="BRCT 2" evidence="63">
    <location>
        <begin position="224"/>
        <end position="315"/>
    </location>
</feature>
<feature type="region of interest" description="Mediates interaction with SP100" evidence="1">
    <location>
        <begin position="111"/>
        <end position="328"/>
    </location>
</feature>
<feature type="region of interest" description="Interaction with MTOR, MAPKAP1 and RICTOR" evidence="38">
    <location>
        <begin position="221"/>
        <end position="402"/>
    </location>
</feature>
<feature type="region of interest" description="Disordered" evidence="3">
    <location>
        <begin position="326"/>
        <end position="346"/>
    </location>
</feature>
<feature type="region of interest" description="Disordered" evidence="3">
    <location>
        <begin position="396"/>
        <end position="415"/>
    </location>
</feature>
<feature type="region of interest" description="Disordered" evidence="3">
    <location>
        <begin position="430"/>
        <end position="478"/>
    </location>
</feature>
<feature type="short sequence motif" description="Nuclear localization signal" evidence="23">
    <location>
        <begin position="461"/>
        <end position="467"/>
    </location>
</feature>
<feature type="short sequence motif" description="FxF/Y motif" evidence="20 52">
    <location>
        <begin position="740"/>
        <end position="749"/>
    </location>
</feature>
<feature type="compositionally biased region" description="Polar residues" evidence="3">
    <location>
        <begin position="328"/>
        <end position="346"/>
    </location>
</feature>
<feature type="compositionally biased region" description="Polar residues" evidence="3">
    <location>
        <begin position="430"/>
        <end position="440"/>
    </location>
</feature>
<feature type="compositionally biased region" description="Polar residues" evidence="3">
    <location>
        <begin position="447"/>
        <end position="462"/>
    </location>
</feature>
<feature type="modified residue" description="Phosphoserine; by ATM" evidence="7">
    <location>
        <position position="278"/>
    </location>
</feature>
<feature type="modified residue" description="Phosphothreonine" evidence="72">
    <location>
        <position position="337"/>
    </location>
</feature>
<feature type="modified residue" description="Phosphoserine; by ATM" evidence="6 8 72">
    <location>
        <position position="343"/>
    </location>
</feature>
<feature type="modified residue" description="Phosphoserine" evidence="72">
    <location>
        <position position="347"/>
    </location>
</feature>
<feature type="modified residue" description="N6-lactoyllysine" evidence="54">
    <location>
        <position position="388"/>
    </location>
</feature>
<feature type="modified residue" description="Phosphoserine" evidence="8 69 70 71 72">
    <location>
        <position position="397"/>
    </location>
</feature>
<feature type="modified residue" description="Phosphothreonine" evidence="71">
    <location>
        <position position="402"/>
    </location>
</feature>
<feature type="modified residue" description="Phosphoserine; by CDK2" evidence="45 68 70 71 72 73">
    <location>
        <position position="432"/>
    </location>
</feature>
<feature type="modified residue" description="Phosphoserine" evidence="72">
    <location>
        <position position="509"/>
    </location>
</feature>
<feature type="modified residue" description="Phosphoserine" evidence="72">
    <location>
        <position position="518"/>
    </location>
</feature>
<feature type="modified residue" description="Phosphoserine" evidence="8">
    <location>
        <position position="615"/>
    </location>
</feature>
<feature type="modified residue" description="Phosphoserine" evidence="72">
    <location>
        <position position="673"/>
    </location>
</feature>
<feature type="cross-link" description="Glycyl lysine isopeptide (Lys-Gly) (interchain with G-Cter in ubiquitin)" evidence="37">
    <location>
        <position position="435"/>
    </location>
</feature>
<feature type="cross-link" description="Glycyl lysine isopeptide (Lys-Gly) (interchain with G-Cter in SUMO2)" evidence="74">
    <location>
        <position position="529"/>
    </location>
</feature>
<feature type="cross-link" description="Glycyl lysine isopeptide (Lys-Gly) (interchain with G-Cter in SUMO2)" evidence="74">
    <location>
        <position position="571"/>
    </location>
</feature>
<feature type="cross-link" description="Glycyl lysine isopeptide (Lys-Gly) (interchain with G-Cter in SUMO2)" evidence="74">
    <location>
        <position position="582"/>
    </location>
</feature>
<feature type="cross-link" description="Glycyl lysine isopeptide (Lys-Gly) (interchain with G-Cter in ubiquitin)" evidence="49">
    <location>
        <position position="686"/>
    </location>
</feature>
<feature type="cross-link" description="Glycyl lysine isopeptide (Lys-Gly) (interchain with G-Cter in ubiquitin)" evidence="49">
    <location>
        <position position="690"/>
    </location>
</feature>
<feature type="cross-link" description="Glycyl lysine isopeptide (Lys-Gly) (interchain with G-Cter in ubiquitin)" evidence="36">
    <location>
        <position position="735"/>
    </location>
</feature>
<feature type="sequence variant" id="VAR_025792" description="In some childhood acute lymphoblastic leukemia patients; uncertain significance; rare variant; dbSNP:rs12721593." evidence="11">
    <original>S</original>
    <variation>L</variation>
    <location>
        <position position="93"/>
    </location>
</feature>
<feature type="sequence variant" id="VAR_025793" description="In some childhood acute lymphoblastic leukemia patients; uncertain significance; rare variant; dbSNP:rs61753720." evidence="11">
    <original>D</original>
    <variation>N</variation>
    <location>
        <position position="95"/>
    </location>
</feature>
<feature type="sequence variant" id="VAR_025794" description="In dbSNP:rs13312858." evidence="58">
    <original>K</original>
    <variation>N</variation>
    <location>
        <position position="105"/>
    </location>
</feature>
<feature type="sequence variant" id="VAR_051226" description="In dbSNP:rs769414.">
    <original>N</original>
    <variation>S</variation>
    <location>
        <position position="142"/>
    </location>
</feature>
<feature type="sequence variant" id="VAR_025795" description="In BC; dbSNP:rs773119929." evidence="14">
    <original>L</original>
    <variation>F</variation>
    <location>
        <position position="150"/>
    </location>
</feature>
<feature type="sequence variant" id="VAR_025796" description="In some childhood acute lymphoblastic leukemia patients; uncertain significance; rare variant; associated with aplastic anemia at homozygosity; dbSNP:rs61754966." evidence="11 18">
    <original>I</original>
    <variation>V</variation>
    <location>
        <position position="171"/>
    </location>
</feature>
<feature type="sequence variant" id="VAR_025797" description="In dbSNP:rs1805794." evidence="14 15 16 55 56 58">
    <original>E</original>
    <variation>Q</variation>
    <location>
        <position position="185"/>
    </location>
</feature>
<feature type="sequence variant" id="VAR_025798" description="In dbSNP:rs61754796." evidence="11">
    <original>V</original>
    <variation>F</variation>
    <location>
        <position position="210"/>
    </location>
</feature>
<feature type="sequence variant" id="VAR_025799" description="In dbSNP:rs34767364." evidence="11">
    <original>R</original>
    <variation>W</variation>
    <location>
        <position position="215"/>
    </location>
</feature>
<feature type="sequence variant" id="VAR_025800" description="In dbSNP:rs769416." evidence="58">
    <original>Q</original>
    <variation>K</variation>
    <location>
        <position position="216"/>
    </location>
</feature>
<feature type="sequence variant" id="VAR_025801" description="In dbSNP:rs769420." evidence="58">
    <original>P</original>
    <variation>L</variation>
    <location>
        <position position="266"/>
    </location>
</feature>
<feature type="sequence variant" id="VAR_051227" description="In dbSNP:rs34120922.">
    <original>K</original>
    <variation>E</variation>
    <location>
        <position position="408"/>
    </location>
</feature>
<feature type="sequence variant" id="VAR_025802" description="In dbSNP:rs3026268." evidence="58">
    <original>T</original>
    <variation>A</variation>
    <location>
        <position position="497"/>
    </location>
</feature>
<feature type="sequence variant" id="VAR_025803" description="In dbSNP:rs142334798." evidence="14">
    <original>L</original>
    <variation>I</variation>
    <location>
        <position position="574"/>
    </location>
</feature>
<feature type="sequence variant" id="VAR_064738" description="Found in a renal cell carcinoma sample; somatic mutation." evidence="35">
    <original>Y</original>
    <variation>H</variation>
    <location>
        <position position="679"/>
    </location>
</feature>
<feature type="mutagenesis site" description="Disrupts nuclear foci formation and block phosphorylation in response to ionizing radiation. Decreased ability to recognize and bind phosphorylated proteins, such as MDC1. In RRHK mutant; abolished ability to recognize and bind phosphorylated proteins, such as RBBP8; when associated with A-43, A-45 and M-160." evidence="6 28 33 47">
    <original>R</original>
    <variation>A</variation>
    <location>
        <position position="28"/>
    </location>
</feature>
<feature type="mutagenesis site" description="Decreased ability to recognize and bind phosphorylated proteins." evidence="33">
    <original>S</original>
    <variation>A</variation>
    <location>
        <position position="42"/>
    </location>
</feature>
<feature type="mutagenesis site" description="In RRHK mutant; abolished ability to recognize and bind phosphorylated proteins, such as RBBP8; when associated with A-28, A-45 and M-160." evidence="47">
    <original>R</original>
    <variation>A</variation>
    <location>
        <position position="43"/>
    </location>
</feature>
<feature type="mutagenesis site" description="Disrupts nuclear foci formation and block phosphorylation in response to ionizing radiation. Decreased ability to recognize and bind phosphorylated proteins, such as MDC1. In RRHK mutant; abolished ability to recognize and bind phosphorylated proteins, such as RBBP8; when associated with A-28, A-43, and M-160." evidence="6 28 47">
    <original>H</original>
    <variation>A</variation>
    <location>
        <position position="45"/>
    </location>
</feature>
<feature type="mutagenesis site" description="Disrupts nuclear foci formation and block phosphorylation in response to ionizing radiation." evidence="6">
    <original>GG</original>
    <variation>EE</variation>
    <location>
        <begin position="136"/>
        <end position="137"/>
    </location>
</feature>
<feature type="mutagenesis site" description="Decreased ability to recognize and bind phosphorylated proteins, such as MDC1. In RRHK mutant; abolished ability to recognize and bind phosphorylated proteins, such as RBBP8; when associated with A-28, A-43 and A-45." evidence="28 33 47">
    <original>K</original>
    <variation>M</variation>
    <location>
        <position position="160"/>
    </location>
</feature>
<feature type="mutagenesis site" description="Disrupts nuclear foci formation and block phosphorylation in response to ionizing radiation." evidence="6">
    <original>Y</original>
    <variation>A</variation>
    <location>
        <position position="176"/>
    </location>
</feature>
<feature type="mutagenesis site" description="Abolished recruitment to DNA damage sites." evidence="27">
    <original>K</original>
    <variation>A</variation>
    <location>
        <position position="233"/>
    </location>
</feature>
<feature type="mutagenesis site" description="Does not affect recruitment to DNA damage sites." evidence="27">
    <original>K</original>
    <variation>R</variation>
    <location>
        <position position="233"/>
    </location>
</feature>
<feature type="mutagenesis site" description="Abolished recruitment to DNA damage sites." evidence="27">
    <original>G</original>
    <variation>R</variation>
    <location>
        <position position="247"/>
    </location>
</feature>
<feature type="mutagenesis site" description="Abolished recruitment to DNA damage sites." evidence="27">
    <original>V</original>
    <variation>P</variation>
    <location>
        <position position="270"/>
    </location>
</feature>
<feature type="mutagenesis site" description="Abolished recruitment to DNA damage sites." evidence="27">
    <original>V</original>
    <variation>R</variation>
    <location>
        <position position="271"/>
    </location>
</feature>
<feature type="mutagenesis site" description="Abrogates ATM-dependent phosphorylation." evidence="8">
    <original>S</original>
    <variation>A</variation>
    <location>
        <position position="343"/>
    </location>
</feature>
<feature type="mutagenesis site" description="Abolished lactylation, leading to decreased recruitment of the MRN complex to DNA damage sites." evidence="54">
    <original>K</original>
    <variation>R</variation>
    <location>
        <position position="388"/>
    </location>
</feature>
<feature type="mutagenesis site" description="Abrogates ATM-dependent phosphorylation. No loss of interaction with KPNA2." evidence="8 23">
    <original>S</original>
    <variation>A</variation>
    <location>
        <position position="397"/>
    </location>
</feature>
<feature type="mutagenesis site" description="Does not affect interaction with TERF2." evidence="45">
    <original>S</original>
    <variation>A</variation>
    <location>
        <position position="432"/>
    </location>
</feature>
<feature type="mutagenesis site" description="Mimics phosphorylation; impaired interaction with TERF2." evidence="45">
    <original>S</original>
    <variation>D</variation>
    <location>
        <position position="432"/>
    </location>
</feature>
<feature type="mutagenesis site" description="Blocks the association with KPNA2, and reduces nuclear foci formation in response to ionizing radiation." evidence="23">
    <original>KR</original>
    <variation>AA</variation>
    <location>
        <begin position="465"/>
        <end position="466"/>
    </location>
</feature>
<feature type="mutagenesis site" description="No loss of interaction with KPNA2." evidence="23">
    <original>Q</original>
    <variation>K</variation>
    <location>
        <position position="583"/>
    </location>
</feature>
<feature type="mutagenesis site" description="Abrogates ATM-dependent phosphorylation." evidence="8">
    <original>S</original>
    <variation>A</variation>
    <location>
        <position position="615"/>
    </location>
</feature>
<feature type="mutagenesis site" description="Does not affect ubiquitination by PELI1; when associated with R-683." evidence="49">
    <original>K</original>
    <variation>R</variation>
    <location>
        <position position="665"/>
    </location>
</feature>
<feature type="mutagenesis site" description="Does not affect ubiquitination by PELI1; when associated with R-665." evidence="49">
    <original>K</original>
    <variation>R</variation>
    <location>
        <position position="683"/>
    </location>
</feature>
<feature type="mutagenesis site" description="Abolished ubiquitination by PELI1." evidence="49">
    <original>KKFKK</original>
    <variation>RFKR</variation>
    <location>
        <begin position="686"/>
        <end position="690"/>
    </location>
</feature>
<feature type="mutagenesis site" description="Abolished ubiquitination by the SCF(SKP2) complex." evidence="36">
    <original>K</original>
    <variation>R</variation>
    <location>
        <position position="735"/>
    </location>
</feature>
<feature type="mutagenesis site" description="Decreases ATM-binding." evidence="20">
    <original>EE</original>
    <variation>AA</variation>
    <location>
        <begin position="736"/>
        <end position="737"/>
    </location>
</feature>
<feature type="mutagenesis site" description="Decreases ATM-binding." evidence="20">
    <original>DD</original>
    <variation>AA</variation>
    <location>
        <begin position="741"/>
        <end position="742"/>
    </location>
</feature>
<feature type="mutagenesis site" description="Impaired interaction with ATM." evidence="52">
    <original>FRY</original>
    <variation>AAA</variation>
    <location>
        <begin position="744"/>
        <end position="746"/>
    </location>
</feature>
<feature type="mutagenesis site" description="Impaired interaction with ATM." evidence="52">
    <original>F</original>
    <variation>A</variation>
    <location>
        <position position="744"/>
    </location>
</feature>
<feature type="mutagenesis site" description="Decreases ATM binding." evidence="20">
    <original>RY</original>
    <variation>AA</variation>
    <location>
        <begin position="745"/>
        <end position="746"/>
    </location>
</feature>
<feature type="mutagenesis site" description="Does not affect interaction with ATM." evidence="52">
    <original>R</original>
    <variation>A</variation>
    <location>
        <position position="745"/>
    </location>
</feature>
<feature type="mutagenesis site" description="Impaired interaction with ATM." evidence="52">
    <original>Y</original>
    <variation>A</variation>
    <location>
        <position position="746"/>
    </location>
</feature>
<feature type="mutagenesis site" description="Does not affect ubiquitination by the SCF(SKP2) complex." evidence="36">
    <original>K</original>
    <variation>R</variation>
    <location>
        <position position="751"/>
    </location>
</feature>
<feature type="turn" evidence="75">
    <location>
        <begin position="426"/>
        <end position="429"/>
    </location>
</feature>
<feature type="turn" evidence="76">
    <location>
        <begin position="742"/>
        <end position="744"/>
    </location>
</feature>
<comment type="function">
    <text evidence="9 12 17 19 21 24 26 27 28 29 32 33 36 37 38 39 41 43 44 45 46 47 49 50 51 52 57">Component of the MRN complex, which plays a central role in double-strand break (DSB) repair, DNA recombination, maintenance of telomere integrity and meiosis (PubMed:10888888, PubMed:15616588, PubMed:18411307, PubMed:18583988, PubMed:18678890, PubMed:19759395, PubMed:23115235, PubMed:28216226, PubMed:28867292, PubMed:9705271). The MRN complex is involved in the repair of DNA double-strand breaks (DSBs) via homologous recombination (HR), an error-free mechanism which primarily occurs during S and G2 phases (PubMed:19759395, PubMed:28867292, PubMed:9705271). The complex (1) mediates the end resection of damaged DNA, which generates proper single-stranded DNA, a key initial steps in HR, and is (2) required for the recruitment of other repair factors and efficient activation of ATM and ATR upon DNA damage (PubMed:19759395, PubMed:9705271). The MRN complex possesses single-strand endonuclease activity and double-strand-specific 3'-5' exonuclease activity, which are provided by MRE11, to initiate end resection, which is required for single-strand invasion and recombination (PubMed:19759395, PubMed:28867292, PubMed:9705271). Within the MRN complex, NBN acts as a protein-protein adapter, which specifically recognizes and binds phosphorylated proteins, promoting their recruitment to DNA damage sites (PubMed:12419185, PubMed:15616588, PubMed:18411307, PubMed:18582474, PubMed:18583988, PubMed:18678890, PubMed:19759395, PubMed:19804756, PubMed:23762398, PubMed:24534091, PubMed:27814491, PubMed:27889449, PubMed:33836577). Recruits MRE11 and RAD50 components of the MRN complex to DSBs in response to DNA damage (PubMed:12419185, PubMed:18411307, PubMed:18583988, PubMed:18678890, PubMed:24534091, PubMed:26438602). Promotes the recruitment of PI3/PI4-kinase family members ATM, ATR, and probably DNA-PKcs to the DNA damage sites, activating their functions (PubMed:15064416, PubMed:15616588, PubMed:15790808, PubMed:16622404, PubMed:22464731, PubMed:30952868, PubMed:35076389). Mediates the recruitment of phosphorylated RBBP8/CtIP to DSBs, leading to cooperation between the MRN complex and RBBP8/CtIP to initiate end resection (PubMed:19759395, PubMed:27814491, PubMed:27889449, PubMed:33836577). RBBP8/CtIP specifically promotes the endonuclease activity of the MRN complex to clear DNA ends containing protein adducts (PubMed:27814491, PubMed:27889449, PubMed:30787182, PubMed:33836577). The MRN complex is also required for the processing of R-loops (PubMed:31537797). NBN also functions in telomere length maintenance via its interaction with TERF2: interaction with TERF2 during G1 phase preventing recruitment of DCLRE1B/Apollo to telomeres (PubMed:10888888, PubMed:28216226). NBN also promotes DNA repair choice at dysfunctional telomeres: NBN phosphorylation by CDK2 promotes non-homologous end joining repair at telomeres, while unphosphorylated NBN promotes microhomology-mediated end-joining (MMEJ) repair (PubMed:28216226). Enhances AKT1 phosphorylation possibly by association with the mTORC2 complex (PubMed:23762398).</text>
</comment>
<comment type="subunit">
    <text evidence="1 5 9 10 12 13 20 22 23 25 26 27 28 29 30 31 32 38 40 42 43 44 45 46 47 48 51 52 53 56 57">Component of the MRN complex composed of two heterodimers RAD50 and MRE11 associated with a single NBN (PubMed:11238951, PubMed:26215093, PubMed:28867292, PubMed:36577401, PubMed:9590181, PubMed:9705271). The MRN complexes dimerize on DNA to form joined MRN-MRN oligomers required for DNA double-strand break repair (PubMed:36577401). As part of the MRN complex, interacts with MCM9; the interaction recruits the complex to DNA repair sites (PubMed:26215093). Component of the BASC complex, at least composed of BRCA1, MSH2, MSH6, MLH1, ATM, BLM, RAD50, MRE11 and NBN (PubMed:10783165). Interacts with histone H2AX; this requires phosphorylation of H2AX on 'Ser-139' and promotes NBN recruitment to DNA damage sites (PubMed:12419185, PubMed:19338747). Interacts with (phosphorylated) MDC1; promoting NBN recruitment to DNA damage sites (PubMed:18411307, PubMed:18582474, PubMed:18583988, PubMed:18678890). Interacts with (phosphorylated) RAD17; promoting NBN recruitment to DNA damage sites (PubMed:24534091). Interacts (via FxF/Y motif) with ATM (PubMed:15758953, PubMed:35076389). Interacts with HJURP (PubMed:17823411). Interacts with INTS3 (PubMed:19683501). Interacts with KPNA2 (PubMed:16188882). Interacts with TERF2; interaction is disrupted upon NBN phosphorylation by CDK2 (PubMed:10888888, PubMed:28216226). Interacts with (phosphorylated) RBBP8/CtIP; the interaction links the role of the MRN complex in DNA double-strand break sensing to resection (PubMed:19759395, PubMed:27814491, PubMed:27889449, PubMed:30787182, PubMed:33836577). Interacts with SP100; recruits NBN to PML bodies (PubMed:12470659). Interacts with ATF2 (PubMed:15916964). Interacts with MTOR, MAPKAP1 isoform 2 and RICTOR; indicative for an association with the mTORC2 complex (PubMed:23762398). Interacts with MRNIP (PubMed:27568553). Interacts with UFL1; promoting UFL1 recruitment to double-strand breaks following DNA damage (PubMed:30886146). Interacts with CYREN (via XLF motif) (By similarity).</text>
</comment>
<comment type="subunit">
    <text evidence="34">(Microbial infection) Interacts with herpes simplex virus 1 protein UL12.</text>
</comment>
<comment type="interaction">
    <interactant intactId="EBI-494844">
        <id>O60934</id>
    </interactant>
    <interactant intactId="EBI-495465">
        <id>Q13315</id>
        <label>ATM</label>
    </interactant>
    <organismsDiffer>false</organismsDiffer>
    <experiments>2</experiments>
</comment>
<comment type="interaction">
    <interactant intactId="EBI-494844">
        <id>O60934</id>
    </interactant>
    <interactant intactId="EBI-447295">
        <id>Q09472</id>
        <label>EP300</label>
    </interactant>
    <organismsDiffer>false</organismsDiffer>
    <experiments>5</experiments>
</comment>
<comment type="interaction">
    <interactant intactId="EBI-494844">
        <id>O60934</id>
    </interactant>
    <interactant intactId="EBI-359343">
        <id>Q9BXW9</id>
        <label>FANCD2</label>
    </interactant>
    <organismsDiffer>false</organismsDiffer>
    <experiments>6</experiments>
</comment>
<comment type="interaction">
    <interactant intactId="EBI-494844">
        <id>O60934</id>
    </interactant>
    <interactant intactId="EBI-494830">
        <id>P16104</id>
        <label>H2AX</label>
    </interactant>
    <organismsDiffer>false</organismsDiffer>
    <experiments>14</experiments>
</comment>
<comment type="interaction">
    <interactant intactId="EBI-494844">
        <id>O60934</id>
    </interactant>
    <interactant intactId="EBI-2680854">
        <id>Q68E01</id>
        <label>INTS3</label>
    </interactant>
    <organismsDiffer>false</organismsDiffer>
    <experiments>2</experiments>
</comment>
<comment type="interaction">
    <interactant intactId="EBI-494844">
        <id>O60934</id>
    </interactant>
    <interactant intactId="EBI-495644">
        <id>Q14676</id>
        <label>MDC1</label>
    </interactant>
    <organismsDiffer>false</organismsDiffer>
    <experiments>33</experiments>
</comment>
<comment type="interaction">
    <interactant intactId="EBI-494844">
        <id>O60934</id>
    </interactant>
    <interactant intactId="EBI-396513">
        <id>P49959</id>
        <label>MRE11</label>
    </interactant>
    <organismsDiffer>false</organismsDiffer>
    <experiments>5</experiments>
</comment>
<comment type="interaction">
    <interactant intactId="EBI-494844">
        <id>O60934</id>
    </interactant>
    <interactant intactId="EBI-968231">
        <id>O75943</id>
        <label>RAD17</label>
    </interactant>
    <organismsDiffer>false</organismsDiffer>
    <experiments>5</experiments>
</comment>
<comment type="interaction">
    <interactant intactId="EBI-494844">
        <id>O60934</id>
    </interactant>
    <interactant intactId="EBI-745715">
        <id>Q99708</id>
        <label>RBBP8</label>
    </interactant>
    <organismsDiffer>false</organismsDiffer>
    <experiments>2</experiments>
</comment>
<comment type="interaction">
    <interactant intactId="EBI-494844">
        <id>O60934</id>
    </interactant>
    <interactant intactId="EBI-1802965">
        <id>Q96EB6</id>
        <label>SIRT1</label>
    </interactant>
    <organismsDiffer>false</organismsDiffer>
    <experiments>5</experiments>
</comment>
<comment type="interaction">
    <interactant intactId="EBI-494844">
        <id>O60934</id>
    </interactant>
    <interactant intactId="EBI-396105">
        <id>Q13428</id>
        <label>TCOF1</label>
    </interactant>
    <organismsDiffer>false</organismsDiffer>
    <experiments>10</experiments>
</comment>
<comment type="interaction">
    <interactant intactId="EBI-494844">
        <id>O60934</id>
    </interactant>
    <interactant intactId="EBI-1769146">
        <id>Q99986</id>
        <label>VRK1</label>
    </interactant>
    <organismsDiffer>false</organismsDiffer>
    <experiments>13</experiments>
</comment>
<comment type="subcellular location">
    <subcellularLocation>
        <location evidence="5 40">Nucleus</location>
    </subcellularLocation>
    <subcellularLocation>
        <location evidence="12 26 27 28 29 30 37 39 40 41">Chromosome</location>
    </subcellularLocation>
    <subcellularLocation>
        <location evidence="13 22">Nucleus</location>
        <location evidence="13 22">PML body</location>
    </subcellularLocation>
    <subcellularLocation>
        <location evidence="9 45">Chromosome</location>
        <location evidence="9 45">Telomere</location>
    </subcellularLocation>
    <text evidence="5 12 26 27 28 29 37 39 40 41">Localizes to discrete nuclear foci after treatment with genotoxic agents (PubMed:10783165, PubMed:26215093, PubMed:26438602). Localizes to DNA double-strand breaks (DSBs); recruited to DNA damage sites via association with phosphorylated proteins, such as phosphorylated H2AX, phosphorylated MDC1 and phosphorylated RAD17 (PubMed:12419185, PubMed:18411307, PubMed:18582474, PubMed:18583988, PubMed:18678890, PubMed:19338747, PubMed:23115235, PubMed:24534091, PubMed:26438602). Acetylation of 'Lys-5' of histone H2AX (H2AXK5ac) promotes NBN/NBS1 assembly at the sites of DNA damage (PubMed:26438602).</text>
</comment>
<comment type="tissue specificity">
    <text evidence="55">Ubiquitous (PubMed:9590180). Expressed at high levels in testis (PubMed:9590180).</text>
</comment>
<comment type="induction">
    <text evidence="38">Up-regulated by ionizing radiation (IR).</text>
</comment>
<comment type="domain">
    <text evidence="33">The FHA and BRCT domains specifically recognize and bind phosphorylated proteins.</text>
</comment>
<comment type="domain">
    <text evidence="20">The C-terminal domain contains a MRE11-binding site, and this interaction is required for the nuclear localization of the MRN complex.</text>
</comment>
<comment type="domain">
    <text evidence="20 52">The FxF/Y motif (also named EEXXXDDL motif) is required for the interaction with ATM and its recruitment to sites of DNA damage and promote the phosphorylation of ATM substrates, leading to the events of DNA damage response.</text>
</comment>
<comment type="PTM">
    <text evidence="4 6 7 8 45">Phosphorylated by ATM in response of ionizing radiation, and such phosphorylation is responsible intra-S phase checkpoint control and telomere maintenance (PubMed:10766245, PubMed:10802669, PubMed:10839544, PubMed:10839545). Phosphorylated at Ser-432 by CDK2 in S/G2 phases abolishes interaction with TERF2, enabling DCLRE1B/Apollo recruitment to telomeres (PubMed:28216226). Phosphorylation at Ser-432 in response to dysfunctional telomeres promotes non-homologous end joining repair at telomeres, while dephosphorylation by PPP1CA promotes microhomology-mediated end-joining (MMEJ) repair (PubMed:28216226).</text>
</comment>
<comment type="PTM">
    <text evidence="36 37 49">Ubiquitinated at Lys-435 via 'Lys-6'-linked ubiquitin chains by RNF8, promoting NBN recruitment to DNA double-strand breaks (DSBs) (PubMed:23115235). Ubiquitinated at Lys-686 and Lys-689 via 'Lys-63'-linked ubiquitin chains by PELI1: ubiquitination takes place following PELI1 phosphorylation and promotes ATM activation and DNA repair (PubMed:30952868). Ubiquitinated at Lys-735 via 'Lys-63'-linked ubiquitin chains by the SCF(SKP2) complex: ubiquitination takes place following SKP2 phosphorylation and promotes ATM activation and DNA repair (PubMed:22464731).</text>
</comment>
<comment type="PTM">
    <text evidence="54">Lactylation at Lys-388 by KAT5 in response to DNA damage promotes recruitment of the MRN complex to DNA damage sites (PubMed:38961290). Delactylated by HDAC3 (PubMed:38961290).</text>
</comment>
<comment type="disease" evidence="55">
    <disease id="DI-02058">
        <name>Nijmegen breakage syndrome</name>
        <acronym>NBS</acronym>
        <description>A disorder characterized by chromosomal instability, radiation sensitivity, microcephaly, growth retardation, immunodeficiency and predisposition to cancer, particularly to lymphoid malignancies.</description>
        <dbReference type="MIM" id="251260"/>
    </disease>
    <text>The disease is caused by variants affecting the gene represented in this entry.</text>
</comment>
<comment type="disease" evidence="14">
    <disease id="DI-02602">
        <name>Breast cancer</name>
        <acronym>BC</acronym>
        <description>A common malignancy originating from breast epithelial tissue. Breast neoplasms can be distinguished by their histologic pattern. Invasive ductal carcinoma is by far the most common type. Breast cancer is etiologically and genetically heterogeneous. Important genetic factors have been indicated by familial occurrence and bilateral involvement. Mutations at more than one locus can be involved in different families or even in the same case.</description>
        <dbReference type="MIM" id="114480"/>
    </disease>
    <text>Disease susceptibility is associated with variants affecting the gene represented in this entry.</text>
</comment>
<comment type="disease" evidence="18">
    <disease id="DI-02842">
        <name>Aplastic anemia</name>
        <acronym>AA</acronym>
        <description>A form of anemia in which the bone marrow fails to produce adequate numbers of peripheral blood elements. It is characterized by peripheral pancytopenia and marrow hypoplasia.</description>
        <dbReference type="MIM" id="609135"/>
    </disease>
    <text>Disease susceptibility may be associated with variants affecting the gene represented in this entry.</text>
</comment>
<comment type="disease">
    <text evidence="11">Defects in NBN might play a role in the pathogenesis of childhood acute lymphoblastic leukemia (ALL).</text>
</comment>
<comment type="similarity">
    <text evidence="62">Belongs to the Nibrin family.</text>
</comment>
<comment type="sequence caution" evidence="62">
    <conflict type="miscellaneous discrepancy">
        <sequence resource="EMBL-CDS" id="AAI08651"/>
    </conflict>
    <text>Contaminating sequence. Potential poly-A sequence starting in position 550.</text>
</comment>
<comment type="sequence caution" evidence="62">
    <conflict type="erroneous initiation">
        <sequence resource="EMBL-CDS" id="CAH56160"/>
    </conflict>
    <text>Truncated N-terminus.</text>
</comment>
<comment type="online information" name="Atlas of Genetics and Cytogenetics in Oncology and Haematology">
    <link uri="https://atlasgeneticsoncology.org/gene/160/NBS1"/>
</comment>
<proteinExistence type="evidence at protein level"/>
<reference key="1">
    <citation type="journal article" date="1998" name="Cell">
        <title>Nibrin, a novel DNA double-strand break repair protein, is mutated in Nijmegen breakage syndrome.</title>
        <authorList>
            <person name="Varon R."/>
            <person name="Vissinga C."/>
            <person name="Platzer M."/>
            <person name="Cerosaletti K.M."/>
            <person name="Chrzanowska K.H."/>
            <person name="Saar K."/>
            <person name="Beckmann G."/>
            <person name="Seemanova E."/>
            <person name="Cooper P.R."/>
            <person name="Nowak N.J."/>
            <person name="Stumm M."/>
            <person name="Weemaes C.M.R."/>
            <person name="Gatti R.A."/>
            <person name="Wilson R.K."/>
            <person name="Digweed M."/>
            <person name="Rosenthal A."/>
            <person name="Sperling K."/>
            <person name="Concannon P."/>
            <person name="Reis A."/>
        </authorList>
    </citation>
    <scope>NUCLEOTIDE SEQUENCE [MRNA]</scope>
    <scope>TISSUE SPECIFICITY</scope>
    <scope>INVOLVEMENT IN NIJMEGEN BREAKAGE SYNDROME</scope>
    <scope>VARIANT GLN-185</scope>
</reference>
<reference key="2">
    <citation type="journal article" date="1998" name="Cell">
        <title>The hMre11/hRad50 protein complex and Nijmegen breakage syndrome: linkage of double-strand break repair to the cellular DNA damage response.</title>
        <authorList>
            <person name="Carney J.P."/>
            <person name="Maser R.S."/>
            <person name="Olivares H."/>
            <person name="Davis E.M."/>
            <person name="Le Beau M."/>
            <person name="Yates J.R. III"/>
            <person name="Hays L."/>
            <person name="Morgan W.F."/>
            <person name="Petrini J.H.J."/>
        </authorList>
    </citation>
    <scope>NUCLEOTIDE SEQUENCE [MRNA]</scope>
    <scope>PROTEIN SEQUENCE OF 189-209; 238-250; 289-299; 300-320; 335-351; 395-405; 409-423; 426-441; 457-465; 503-529; 552-568; 595-613; 625-635; 653-660; 671-683 AND 736-745</scope>
    <scope>VARIANT GLN-185</scope>
    <scope>INTERACTION WITH MRE11 AND RAD50</scope>
</reference>
<reference key="3">
    <citation type="journal article" date="1998" name="Nat. Genet.">
        <title>Positional cloning of the gene for Nijmegen breakage syndrome.</title>
        <authorList>
            <person name="Matsuura S."/>
            <person name="Tauchi H."/>
            <person name="Nakamura A."/>
            <person name="Kondo N."/>
            <person name="Sakamoto S."/>
            <person name="Endo S."/>
            <person name="Smeets D."/>
            <person name="Solder B."/>
            <person name="Belohradsky B.H."/>
            <person name="Kaloustian V.M."/>
            <person name="Oshimura M."/>
            <person name="Isomura M."/>
            <person name="Nakamura Y."/>
            <person name="Komatsu K."/>
        </authorList>
    </citation>
    <scope>NUCLEOTIDE SEQUENCE [GENOMIC DNA]</scope>
</reference>
<reference key="4">
    <citation type="journal article" date="1999" name="Genomics">
        <title>Sequence analysis of an 800-kb genomic DNA region on chromosome 8q21 that contains the Nijmegen breakage syndrome gene, NBS1.</title>
        <authorList>
            <person name="Tauchi H."/>
            <person name="Matsuura S."/>
            <person name="Isomura M."/>
            <person name="Kinjo T."/>
            <person name="Nakamura A."/>
            <person name="Sakamoto S."/>
            <person name="Kondo N."/>
            <person name="Endo S."/>
            <person name="Komatsu K."/>
            <person name="Nakamura Y."/>
        </authorList>
    </citation>
    <scope>NUCLEOTIDE SEQUENCE [GENOMIC DNA]</scope>
    <source>
        <tissue>Fibroblast</tissue>
    </source>
</reference>
<reference key="5">
    <citation type="journal article" date="2004" name="Nat. Genet.">
        <title>Complete sequencing and characterization of 21,243 full-length human cDNAs.</title>
        <authorList>
            <person name="Ota T."/>
            <person name="Suzuki Y."/>
            <person name="Nishikawa T."/>
            <person name="Otsuki T."/>
            <person name="Sugiyama T."/>
            <person name="Irie R."/>
            <person name="Wakamatsu A."/>
            <person name="Hayashi K."/>
            <person name="Sato H."/>
            <person name="Nagai K."/>
            <person name="Kimura K."/>
            <person name="Makita H."/>
            <person name="Sekine M."/>
            <person name="Obayashi M."/>
            <person name="Nishi T."/>
            <person name="Shibahara T."/>
            <person name="Tanaka T."/>
            <person name="Ishii S."/>
            <person name="Yamamoto J."/>
            <person name="Saito K."/>
            <person name="Kawai Y."/>
            <person name="Isono Y."/>
            <person name="Nakamura Y."/>
            <person name="Nagahari K."/>
            <person name="Murakami K."/>
            <person name="Yasuda T."/>
            <person name="Iwayanagi T."/>
            <person name="Wagatsuma M."/>
            <person name="Shiratori A."/>
            <person name="Sudo H."/>
            <person name="Hosoiri T."/>
            <person name="Kaku Y."/>
            <person name="Kodaira H."/>
            <person name="Kondo H."/>
            <person name="Sugawara M."/>
            <person name="Takahashi M."/>
            <person name="Kanda K."/>
            <person name="Yokoi T."/>
            <person name="Furuya T."/>
            <person name="Kikkawa E."/>
            <person name="Omura Y."/>
            <person name="Abe K."/>
            <person name="Kamihara K."/>
            <person name="Katsuta N."/>
            <person name="Sato K."/>
            <person name="Tanikawa M."/>
            <person name="Yamazaki M."/>
            <person name="Ninomiya K."/>
            <person name="Ishibashi T."/>
            <person name="Yamashita H."/>
            <person name="Murakawa K."/>
            <person name="Fujimori K."/>
            <person name="Tanai H."/>
            <person name="Kimata M."/>
            <person name="Watanabe M."/>
            <person name="Hiraoka S."/>
            <person name="Chiba Y."/>
            <person name="Ishida S."/>
            <person name="Ono Y."/>
            <person name="Takiguchi S."/>
            <person name="Watanabe S."/>
            <person name="Yosida M."/>
            <person name="Hotuta T."/>
            <person name="Kusano J."/>
            <person name="Kanehori K."/>
            <person name="Takahashi-Fujii A."/>
            <person name="Hara H."/>
            <person name="Tanase T.-O."/>
            <person name="Nomura Y."/>
            <person name="Togiya S."/>
            <person name="Komai F."/>
            <person name="Hara R."/>
            <person name="Takeuchi K."/>
            <person name="Arita M."/>
            <person name="Imose N."/>
            <person name="Musashino K."/>
            <person name="Yuuki H."/>
            <person name="Oshima A."/>
            <person name="Sasaki N."/>
            <person name="Aotsuka S."/>
            <person name="Yoshikawa Y."/>
            <person name="Matsunawa H."/>
            <person name="Ichihara T."/>
            <person name="Shiohata N."/>
            <person name="Sano S."/>
            <person name="Moriya S."/>
            <person name="Momiyama H."/>
            <person name="Satoh N."/>
            <person name="Takami S."/>
            <person name="Terashima Y."/>
            <person name="Suzuki O."/>
            <person name="Nakagawa S."/>
            <person name="Senoh A."/>
            <person name="Mizoguchi H."/>
            <person name="Goto Y."/>
            <person name="Shimizu F."/>
            <person name="Wakebe H."/>
            <person name="Hishigaki H."/>
            <person name="Watanabe T."/>
            <person name="Sugiyama A."/>
            <person name="Takemoto M."/>
            <person name="Kawakami B."/>
            <person name="Yamazaki M."/>
            <person name="Watanabe K."/>
            <person name="Kumagai A."/>
            <person name="Itakura S."/>
            <person name="Fukuzumi Y."/>
            <person name="Fujimori Y."/>
            <person name="Komiyama M."/>
            <person name="Tashiro H."/>
            <person name="Tanigami A."/>
            <person name="Fujiwara T."/>
            <person name="Ono T."/>
            <person name="Yamada K."/>
            <person name="Fujii Y."/>
            <person name="Ozaki K."/>
            <person name="Hirao M."/>
            <person name="Ohmori Y."/>
            <person name="Kawabata A."/>
            <person name="Hikiji T."/>
            <person name="Kobatake N."/>
            <person name="Inagaki H."/>
            <person name="Ikema Y."/>
            <person name="Okamoto S."/>
            <person name="Okitani R."/>
            <person name="Kawakami T."/>
            <person name="Noguchi S."/>
            <person name="Itoh T."/>
            <person name="Shigeta K."/>
            <person name="Senba T."/>
            <person name="Matsumura K."/>
            <person name="Nakajima Y."/>
            <person name="Mizuno T."/>
            <person name="Morinaga M."/>
            <person name="Sasaki M."/>
            <person name="Togashi T."/>
            <person name="Oyama M."/>
            <person name="Hata H."/>
            <person name="Watanabe M."/>
            <person name="Komatsu T."/>
            <person name="Mizushima-Sugano J."/>
            <person name="Satoh T."/>
            <person name="Shirai Y."/>
            <person name="Takahashi Y."/>
            <person name="Nakagawa K."/>
            <person name="Okumura K."/>
            <person name="Nagase T."/>
            <person name="Nomura N."/>
            <person name="Kikuchi H."/>
            <person name="Masuho Y."/>
            <person name="Yamashita R."/>
            <person name="Nakai K."/>
            <person name="Yada T."/>
            <person name="Nakamura Y."/>
            <person name="Ohara O."/>
            <person name="Isogai T."/>
            <person name="Sugano S."/>
        </authorList>
    </citation>
    <scope>NUCLEOTIDE SEQUENCE [LARGE SCALE MRNA]</scope>
    <scope>VARIANT GLN-185</scope>
    <source>
        <tissue>Brain</tissue>
    </source>
</reference>
<reference key="6">
    <citation type="submission" date="2005-04" db="EMBL/GenBank/DDBJ databases">
        <authorList>
            <person name="Suzuki Y."/>
            <person name="Sugano S."/>
            <person name="Totoki Y."/>
            <person name="Toyoda A."/>
            <person name="Takeda T."/>
            <person name="Sakaki Y."/>
            <person name="Tanaka A."/>
            <person name="Yokoyama S."/>
        </authorList>
    </citation>
    <scope>NUCLEOTIDE SEQUENCE [LARGE SCALE MRNA]</scope>
    <source>
        <tissue>Synovial cell</tissue>
    </source>
</reference>
<reference key="7">
    <citation type="submission" date="2004-03" db="EMBL/GenBank/DDBJ databases">
        <authorList>
            <consortium name="NIEHS SNPs program"/>
        </authorList>
    </citation>
    <scope>NUCLEOTIDE SEQUENCE [GENOMIC DNA]</scope>
    <scope>VARIANTS ASN-105; GLN-185; LYS-216; LEU-266 AND ALA-497</scope>
</reference>
<reference key="8">
    <citation type="submission" date="2005-07" db="EMBL/GenBank/DDBJ databases">
        <authorList>
            <person name="Mural R.J."/>
            <person name="Istrail S."/>
            <person name="Sutton G.G."/>
            <person name="Florea L."/>
            <person name="Halpern A.L."/>
            <person name="Mobarry C.M."/>
            <person name="Lippert R."/>
            <person name="Walenz B."/>
            <person name="Shatkay H."/>
            <person name="Dew I."/>
            <person name="Miller J.R."/>
            <person name="Flanigan M.J."/>
            <person name="Edwards N.J."/>
            <person name="Bolanos R."/>
            <person name="Fasulo D."/>
            <person name="Halldorsson B.V."/>
            <person name="Hannenhalli S."/>
            <person name="Turner R."/>
            <person name="Yooseph S."/>
            <person name="Lu F."/>
            <person name="Nusskern D.R."/>
            <person name="Shue B.C."/>
            <person name="Zheng X.H."/>
            <person name="Zhong F."/>
            <person name="Delcher A.L."/>
            <person name="Huson D.H."/>
            <person name="Kravitz S.A."/>
            <person name="Mouchard L."/>
            <person name="Reinert K."/>
            <person name="Remington K.A."/>
            <person name="Clark A.G."/>
            <person name="Waterman M.S."/>
            <person name="Eichler E.E."/>
            <person name="Adams M.D."/>
            <person name="Hunkapiller M.W."/>
            <person name="Myers E.W."/>
            <person name="Venter J.C."/>
        </authorList>
    </citation>
    <scope>NUCLEOTIDE SEQUENCE [LARGE SCALE GENOMIC DNA]</scope>
</reference>
<reference key="9">
    <citation type="journal article" date="2004" name="Genome Res.">
        <title>The status, quality, and expansion of the NIH full-length cDNA project: the Mammalian Gene Collection (MGC).</title>
        <authorList>
            <consortium name="The MGC Project Team"/>
        </authorList>
    </citation>
    <scope>NUCLEOTIDE SEQUENCE [LARGE SCALE MRNA]</scope>
    <source>
        <tissue>Brain</tissue>
        <tissue>Skin</tissue>
        <tissue>Testis</tissue>
    </source>
</reference>
<reference key="10">
    <citation type="journal article" date="2007" name="BMC Genomics">
        <title>The full-ORF clone resource of the German cDNA consortium.</title>
        <authorList>
            <person name="Bechtel S."/>
            <person name="Rosenfelder H."/>
            <person name="Duda A."/>
            <person name="Schmidt C.P."/>
            <person name="Ernst U."/>
            <person name="Wellenreuther R."/>
            <person name="Mehrle A."/>
            <person name="Schuster C."/>
            <person name="Bahr A."/>
            <person name="Bloecker H."/>
            <person name="Heubner D."/>
            <person name="Hoerlein A."/>
            <person name="Michel G."/>
            <person name="Wedler H."/>
            <person name="Koehrer K."/>
            <person name="Ottenwaelder B."/>
            <person name="Poustka A."/>
            <person name="Wiemann S."/>
            <person name="Schupp I."/>
        </authorList>
    </citation>
    <scope>NUCLEOTIDE SEQUENCE [LARGE SCALE MRNA] OF 58-754</scope>
    <source>
        <tissue>Colon endothelium</tissue>
    </source>
</reference>
<reference key="11">
    <citation type="journal article" date="1998" name="J. Biol. Chem.">
        <title>Nuclease activities in a complex of human recombination and DNA repair factors Rad50, Mre11, and p95.</title>
        <authorList>
            <person name="Trujillo K.M."/>
            <person name="Yuan S.-S.F."/>
            <person name="Lee E.Y.-H.P."/>
            <person name="Sung P."/>
        </authorList>
    </citation>
    <scope>FUNCTION IN DSB REPAIR</scope>
    <scope>IDENTIFICATION IN THE MRN COMPLEX WITH MRE11 AND RAD50</scope>
</reference>
<reference key="12">
    <citation type="journal article" date="2000" name="Genes Dev.">
        <title>BASC, a super complex of BRCA1-associated proteins involved in the recognition and repair of aberrant DNA structures.</title>
        <authorList>
            <person name="Wang Y."/>
            <person name="Cortez D."/>
            <person name="Yazdi P."/>
            <person name="Neff N."/>
            <person name="Elledge S.J."/>
            <person name="Qin J."/>
        </authorList>
    </citation>
    <scope>SUBCELLULAR LOCATION</scope>
    <scope>IDENTIFICATION IN THE BASC COMPLEX WITH BRCA1; MSH2; MSH6; MLH1; ATM; BLM; RAD50 AND MRE11</scope>
</reference>
<reference key="13">
    <citation type="journal article" date="2000" name="Nat. Genet.">
        <title>ATM-dependent phosphorylation of nibrin in response to radiation exposure.</title>
        <authorList>
            <person name="Gatei M."/>
            <person name="Young D."/>
            <person name="Cerosaletti K.M."/>
            <person name="Desai-Mehta A."/>
            <person name="Spring K."/>
            <person name="Kozlov S."/>
            <person name="Lavin M.F."/>
            <person name="Gatti R.A."/>
            <person name="Concannon P."/>
            <person name="Khanna K.K."/>
        </authorList>
    </citation>
    <scope>PHOSPHORYLATION AT SER-343</scope>
    <scope>MUTAGENESIS OF ARG-28; HIS-45; 136-GLY-GLY-137 AND TYR-176</scope>
</reference>
<reference key="14">
    <citation type="journal article" date="2000" name="Nature">
        <title>Functional link between ataxia-telangiectasia and Nijmegen breakage syndrome gene products.</title>
        <authorList>
            <person name="Zhao S."/>
            <person name="Weng Y.-C."/>
            <person name="Yuan S.-S.F."/>
            <person name="Lin Y.-T."/>
            <person name="Hsu H.-C."/>
            <person name="Lin S.-C."/>
            <person name="Gerbino E."/>
            <person name="Song M.-H."/>
            <person name="Zdzienicka M.Z."/>
            <person name="Gatti R.A."/>
            <person name="Shay J.W."/>
            <person name="Ziv Y."/>
            <person name="Shiloh Y."/>
            <person name="Lee E.Y.-H.P."/>
        </authorList>
    </citation>
    <scope>PHOSPHORYLATION AT SER-278</scope>
</reference>
<reference key="15">
    <citation type="journal article" date="2000" name="Nature">
        <title>ATM phosphorylates p95/nbs1 in an S-phase checkpoint pathway.</title>
        <authorList>
            <person name="Lim D.-S."/>
            <person name="Kim S.-T."/>
            <person name="Xu B."/>
            <person name="Maser R.S."/>
            <person name="Lin J."/>
            <person name="Petrini J.H.J."/>
            <person name="Kastan M.B."/>
        </authorList>
    </citation>
    <scope>PHOSPHORYLATION</scope>
</reference>
<reference key="16">
    <citation type="journal article" date="2000" name="Nature">
        <title>ATM phosphorylation of Nijmegen breakage syndrome protein is required in a DNA damage response.</title>
        <authorList>
            <person name="Wu X."/>
            <person name="Ranganathan V."/>
            <person name="Weisman D.S."/>
            <person name="Heine W.F."/>
            <person name="Ciccone D.N."/>
            <person name="O'Neill T.B."/>
            <person name="Crick K.E."/>
            <person name="Pierce K.A."/>
            <person name="Lane W.S."/>
            <person name="Rathbun G."/>
            <person name="Livingston D.M."/>
            <person name="Weaver D.T."/>
        </authorList>
    </citation>
    <scope>PHOSPHORYLATION AT SER-343; SER-397 AND SER-615</scope>
    <scope>MUTAGENESIS OF SER-343; SER-397 AND SER-615</scope>
</reference>
<reference key="17">
    <citation type="journal article" date="2000" name="Nat. Genet.">
        <title>Cell-cycle-regulated association of RAD50/MRE11/NBS1 with TRF2 and human telomeres.</title>
        <authorList>
            <person name="Zhu X.-D."/>
            <person name="Kuester B."/>
            <person name="Mann M."/>
            <person name="Petrini J.H.J."/>
            <person name="de Lange T."/>
        </authorList>
    </citation>
    <scope>FUNCTION IN TELOMERES</scope>
    <scope>IDENTIFICATION BY MASS SPECTROMETRY</scope>
    <scope>IDENTIFICATION IN A COMPLEX WITH TERF2</scope>
    <scope>SUBCELLULAR LOCATION</scope>
</reference>
<reference key="18">
    <citation type="journal article" date="2001" name="Mol. Cell. Biol.">
        <title>Distinct functional domains of nibrin mediate Mre11 binding, focus formation, and nuclear localization.</title>
        <authorList>
            <person name="Desai-Mehta A."/>
            <person name="Cerosaletti K.M."/>
            <person name="Concannon P."/>
        </authorList>
    </citation>
    <scope>INTERACTION WITH MRE11</scope>
</reference>
<reference key="19">
    <citation type="journal article" date="2002" name="Biochem. Biophys. Res. Commun.">
        <title>Recruitment of NBS1 into PML oncogenic domains via interaction with SP100 protein.</title>
        <authorList>
            <person name="Naka K."/>
            <person name="Ikeda K."/>
            <person name="Motoyama N."/>
        </authorList>
    </citation>
    <scope>INTERACTION WITH SP100</scope>
    <scope>SUBCELLULAR LOCATION</scope>
</reference>
<reference key="20">
    <citation type="journal article" date="2002" name="Curr. Biol.">
        <title>NBS1 localizes to gamma-H2AX foci through interaction with the FHA/BRCT domain.</title>
        <authorList>
            <person name="Kobayashi J."/>
            <person name="Tauchi H."/>
            <person name="Sakamoto S."/>
            <person name="Nakamura A."/>
            <person name="Morishima K."/>
            <person name="Matsuura S."/>
            <person name="Kobayashi T."/>
            <person name="Tamai K."/>
            <person name="Tanimoto K."/>
            <person name="Komatsu K."/>
        </authorList>
    </citation>
    <scope>FUNCTION</scope>
    <scope>SUBCELLULAR LOCATION</scope>
    <scope>INTERACTION WITH H2AX</scope>
</reference>
<reference key="21">
    <citation type="journal article" date="2004" name="Science">
        <title>Direct activation of the ATM protein kinase by the Mre11/Rad50/Nbs1 complex.</title>
        <authorList>
            <person name="Lee J.-H."/>
            <person name="Paull T.T."/>
        </authorList>
    </citation>
    <scope>FUNCTION IN ATM ACTIVATION</scope>
</reference>
<reference key="22">
    <citation type="journal article" date="2005" name="J. Biol. Chem.">
        <title>Importin KPNA2 is required for proper nuclear localization and multiple functions of NBS1.</title>
        <authorList>
            <person name="Tseng S.-F."/>
            <person name="Chang C.-Y."/>
            <person name="Wu K.-J."/>
            <person name="Teng S.-C."/>
        </authorList>
    </citation>
    <scope>INTERACTION WITH KPNA2</scope>
    <scope>MUTAGENESIS OF SER-397; 465-LYS-ARG-466 AND GLN-583</scope>
</reference>
<reference key="23">
    <citation type="journal article" date="2005" name="Mol. Cell">
        <title>ATM-dependent phosphorylation of ATF2 is required for the DNA damage response.</title>
        <authorList>
            <person name="Bhoumik A."/>
            <person name="Takahashi S."/>
            <person name="Breitweiser W."/>
            <person name="Shiloh Y."/>
            <person name="Jones N."/>
            <person name="Ronai Z."/>
        </authorList>
    </citation>
    <scope>INTERACTION WITH ATF2</scope>
    <scope>SUBCELLULAR LOCATION</scope>
</reference>
<reference key="24">
    <citation type="journal article" date="2005" name="Nature">
        <title>Conserved modes of recruitment of ATM, ATR and DNA-PKcs to sites of DNA damage.</title>
        <authorList>
            <person name="Falck J."/>
            <person name="Coates J."/>
            <person name="Jackson S.P."/>
        </authorList>
    </citation>
    <scope>DOMAIN</scope>
    <scope>MUTAGENESIS OF 736-GLU-GLU-737; 741-ASP-ASP-742 AND 745-ARG-TYR-746</scope>
</reference>
<reference key="25">
    <citation type="journal article" date="2005" name="EMBO J.">
        <title>Nbs1 is required for ATR-dependent phosphorylation events.</title>
        <authorList>
            <person name="Stiff T."/>
            <person name="Reis C."/>
            <person name="Alderton G.K."/>
            <person name="Woodbine L."/>
            <person name="O'Driscoll M."/>
            <person name="Jeggo P.A."/>
        </authorList>
    </citation>
    <scope>FUNCTION</scope>
</reference>
<reference key="26">
    <citation type="journal article" date="2005" name="Science">
        <title>ATM activation by DNA double-strand breaks through the Mre11-Rad50-Nbs1 complex.</title>
        <authorList>
            <person name="Lee J.H."/>
            <person name="Paull T.T."/>
        </authorList>
    </citation>
    <scope>FUNCTION IN ATM ACTIVATION</scope>
</reference>
<reference key="27">
    <citation type="journal article" date="2006" name="Cell Res.">
        <title>The role of NBS1 in DNA double strand break repair, telomere stability, and cell cycle checkpoint control.</title>
        <authorList>
            <person name="Zhang Y."/>
            <person name="Zhou J."/>
            <person name="Lim C.U."/>
        </authorList>
    </citation>
    <scope>REVIEW</scope>
</reference>
<reference key="28">
    <citation type="journal article" date="2006" name="Nat. Struct. Mol. Biol.">
        <title>Two-step activation of ATM by DNA and the Mre11-Rad50-Nbs1 complex.</title>
        <authorList>
            <person name="Dupre A."/>
            <person name="Boyer-Chatenet L."/>
            <person name="Gautier J."/>
        </authorList>
    </citation>
    <scope>FUNCTION IN ATM ACTIVATION</scope>
</reference>
<reference key="29">
    <citation type="journal article" date="2006" name="Nat. Biotechnol.">
        <title>A probability-based approach for high-throughput protein phosphorylation analysis and site localization.</title>
        <authorList>
            <person name="Beausoleil S.A."/>
            <person name="Villen J."/>
            <person name="Gerber S.A."/>
            <person name="Rush J."/>
            <person name="Gygi S.P."/>
        </authorList>
    </citation>
    <scope>PHOSPHORYLATION [LARGE SCALE ANALYSIS] AT SER-432</scope>
    <scope>IDENTIFICATION BY MASS SPECTROMETRY [LARGE SCALE ANALYSIS]</scope>
    <source>
        <tissue>Cervix carcinoma</tissue>
    </source>
</reference>
<reference key="30">
    <citation type="journal article" date="2007" name="Cancer Res.">
        <title>Activation of Holliday junction recognizing protein involved in the chromosomal stability and immortality of cancer cells.</title>
        <authorList>
            <person name="Kato T."/>
            <person name="Sato N."/>
            <person name="Hayama S."/>
            <person name="Yamabuki T."/>
            <person name="Ito T."/>
            <person name="Miyamoto M."/>
            <person name="Kondo S."/>
            <person name="Nakamura Y."/>
            <person name="Daigo Y."/>
        </authorList>
    </citation>
    <scope>INTERACTION WITH HJURP</scope>
</reference>
<reference key="31">
    <citation type="journal article" date="2007" name="Science">
        <title>ATM and ATR substrate analysis reveals extensive protein networks responsive to DNA damage.</title>
        <authorList>
            <person name="Matsuoka S."/>
            <person name="Ballif B.A."/>
            <person name="Smogorzewska A."/>
            <person name="McDonald E.R. III"/>
            <person name="Hurov K.E."/>
            <person name="Luo J."/>
            <person name="Bakalarski C.E."/>
            <person name="Zhao Z."/>
            <person name="Solimini N."/>
            <person name="Lerenthal Y."/>
            <person name="Shiloh Y."/>
            <person name="Gygi S.P."/>
            <person name="Elledge S.J."/>
        </authorList>
    </citation>
    <scope>PHOSPHORYLATION [LARGE SCALE ANALYSIS] AT SER-397</scope>
    <scope>IDENTIFICATION BY MASS SPECTROMETRY [LARGE SCALE ANALYSIS]</scope>
    <source>
        <tissue>Embryonic kidney</tissue>
    </source>
</reference>
<reference key="32">
    <citation type="journal article" date="2008" name="EMBO Rep.">
        <title>Phospho-dependent interactions between NBS1 and MDC1 mediate chromatin retention of the MRN complex at sites of DNA damage.</title>
        <authorList>
            <person name="Chapman J.R."/>
            <person name="Jackson S.P."/>
        </authorList>
    </citation>
    <scope>FUNCTION</scope>
    <scope>SUBCELLULAR LOCATION</scope>
    <scope>INTERACTION WITH MDC1</scope>
    <scope>MUTAGENESIS OF ARG-28; HIS-45 AND LYS-160</scope>
</reference>
<reference key="33">
    <citation type="journal article" date="2008" name="J. Cell Biol.">
        <title>Phosphorylation of SDT repeats in the MDC1 N terminus triggers retention of NBS1 at the DNA damage-modified chromatin.</title>
        <authorList>
            <person name="Melander F."/>
            <person name="Bekker-Jensen S."/>
            <person name="Falck J."/>
            <person name="Bartek J."/>
            <person name="Mailand N."/>
            <person name="Lukas J."/>
        </authorList>
    </citation>
    <scope>FUNCTION</scope>
    <scope>SUBCELLULAR LOCATION</scope>
    <scope>INTERACTION WITH MDC1</scope>
</reference>
<reference key="34">
    <citation type="journal article" date="2008" name="J. Mol. Biol.">
        <title>Structure of a second BRCT domain identified in the nijmegen breakage syndrome protein Nbs1 and its function in an MDC1-dependent localization of Nbs1 to DNA damage sites.</title>
        <authorList>
            <person name="Xu C."/>
            <person name="Wu L."/>
            <person name="Cui G."/>
            <person name="Botuyan M.V."/>
            <person name="Chen J."/>
            <person name="Mer G."/>
        </authorList>
    </citation>
    <scope>FUNCTION</scope>
    <scope>SUBCELLULAR LOCATION</scope>
    <scope>DOMAIN</scope>
    <scope>INTERACTION WITH MDC1</scope>
    <scope>MUTAGENESIS OF LYS-233; GLY-247; VAL-270 AND VAL-271</scope>
</reference>
<reference key="35">
    <citation type="journal article" date="2008" name="Proc. Natl. Acad. Sci. U.S.A.">
        <title>MDC1 regulates intra-S-phase checkpoint by targeting NBS1 to DNA double-strand breaks.</title>
        <authorList>
            <person name="Wu L."/>
            <person name="Luo K."/>
            <person name="Lou Z."/>
            <person name="Chen J."/>
        </authorList>
    </citation>
    <scope>FUNCTION</scope>
    <scope>SUBCELLULAR LOCATION</scope>
    <scope>INTERACTION WITH MDC1</scope>
</reference>
<reference key="36">
    <citation type="journal article" date="2008" name="Proc. Natl. Acad. Sci. U.S.A.">
        <title>A quantitative atlas of mitotic phosphorylation.</title>
        <authorList>
            <person name="Dephoure N."/>
            <person name="Zhou C."/>
            <person name="Villen J."/>
            <person name="Beausoleil S.A."/>
            <person name="Bakalarski C.E."/>
            <person name="Elledge S.J."/>
            <person name="Gygi S.P."/>
        </authorList>
    </citation>
    <scope>PHOSPHORYLATION [LARGE SCALE ANALYSIS] AT SER-397 AND SER-432</scope>
    <scope>IDENTIFICATION BY MASS SPECTROMETRY [LARGE SCALE ANALYSIS]</scope>
    <source>
        <tissue>Cervix carcinoma</tissue>
    </source>
</reference>
<reference key="37">
    <citation type="journal article" date="2009" name="Anal. Chem.">
        <title>Lys-N and trypsin cover complementary parts of the phosphoproteome in a refined SCX-based approach.</title>
        <authorList>
            <person name="Gauci S."/>
            <person name="Helbig A.O."/>
            <person name="Slijper M."/>
            <person name="Krijgsveld J."/>
            <person name="Heck A.J."/>
            <person name="Mohammed S."/>
        </authorList>
    </citation>
    <scope>IDENTIFICATION BY MASS SPECTROMETRY [LARGE SCALE ANALYSIS]</scope>
</reference>
<reference key="38">
    <citation type="journal article" date="2009" name="Biochem. Biophys. Res. Commun.">
        <title>Histone H2AX participates the DNA damage-induced ATM activation through interaction with NBS1.</title>
        <authorList>
            <person name="Kobayashi J."/>
            <person name="Tauchi H."/>
            <person name="Chen B."/>
            <person name="Burma S."/>
            <person name="Tashiro S."/>
            <person name="Matsuura S."/>
            <person name="Tanimoto K."/>
            <person name="Chen D.J."/>
            <person name="Komatsu K."/>
        </authorList>
    </citation>
    <scope>SUBCELLULAR LOCATION</scope>
    <scope>INTERACTION WITH H2AX</scope>
</reference>
<reference key="39">
    <citation type="journal article" date="2009" name="Cell">
        <title>A supramodular FHA/BRCT-repeat architecture mediates Nbs1 adaptor function in response to DNA damage.</title>
        <authorList>
            <person name="Lloyd J."/>
            <person name="Chapman J.R."/>
            <person name="Clapperton J.A."/>
            <person name="Haire L.F."/>
            <person name="Hartsuiker E."/>
            <person name="Li J."/>
            <person name="Carr A.M."/>
            <person name="Jackson S.P."/>
            <person name="Smerdon S.J."/>
        </authorList>
    </citation>
    <scope>FUNCTION</scope>
    <scope>DOMAIN</scope>
    <scope>MUTAGENESIS OF ARG-28; SER-42 AND LYS-160</scope>
</reference>
<reference key="40">
    <citation type="journal article" date="2009" name="J. Biol. Chem.">
        <title>N terminus of CtIP is critical for homologous recombination-mediated double-strand break repair.</title>
        <authorList>
            <person name="Yuan J."/>
            <person name="Chen J."/>
        </authorList>
    </citation>
    <scope>FUNCTION</scope>
    <scope>INTERACTION WITH RBBP8</scope>
</reference>
<reference key="41">
    <citation type="journal article" date="2009" name="Mol. Cell">
        <title>SOSS complexes participate in the maintenance of genomic stability.</title>
        <authorList>
            <person name="Huang J."/>
            <person name="Gong Z."/>
            <person name="Ghosal G."/>
            <person name="Chen J."/>
        </authorList>
    </citation>
    <scope>INTERACTION WITH INTS3</scope>
</reference>
<reference key="42">
    <citation type="journal article" date="2009" name="Sci. Signal.">
        <title>Quantitative phosphoproteomic analysis of T cell receptor signaling reveals system-wide modulation of protein-protein interactions.</title>
        <authorList>
            <person name="Mayya V."/>
            <person name="Lundgren D.H."/>
            <person name="Hwang S.-I."/>
            <person name="Rezaul K."/>
            <person name="Wu L."/>
            <person name="Eng J.K."/>
            <person name="Rodionov V."/>
            <person name="Han D.K."/>
        </authorList>
    </citation>
    <scope>IDENTIFICATION BY MASS SPECTROMETRY [LARGE SCALE ANALYSIS]</scope>
    <source>
        <tissue>Leukemic T-cell</tissue>
    </source>
</reference>
<reference key="43">
    <citation type="journal article" date="2010" name="J. Virol.">
        <title>Physical interaction between the herpes simplex virus type 1 exonuclease, UL12, and the DNA double-strand break-sensing MRN complex.</title>
        <authorList>
            <person name="Balasubramanian N."/>
            <person name="Bai P."/>
            <person name="Buchek G."/>
            <person name="Korza G."/>
            <person name="Weller S.K."/>
        </authorList>
    </citation>
    <scope>INTERACTION WITH HERPES SIMPLEX VIRUS 1 UL12 (MICROBIAL INFECTION)</scope>
</reference>
<reference key="44">
    <citation type="journal article" date="2010" name="Sci. Signal.">
        <title>Quantitative phosphoproteomics reveals widespread full phosphorylation site occupancy during mitosis.</title>
        <authorList>
            <person name="Olsen J.V."/>
            <person name="Vermeulen M."/>
            <person name="Santamaria A."/>
            <person name="Kumar C."/>
            <person name="Miller M.L."/>
            <person name="Jensen L.J."/>
            <person name="Gnad F."/>
            <person name="Cox J."/>
            <person name="Jensen T.S."/>
            <person name="Nigg E.A."/>
            <person name="Brunak S."/>
            <person name="Mann M."/>
        </authorList>
    </citation>
    <scope>PHOSPHORYLATION [LARGE SCALE ANALYSIS] AT SER-397; THR-402 AND SER-432</scope>
    <scope>IDENTIFICATION BY MASS SPECTROMETRY [LARGE SCALE ANALYSIS]</scope>
    <source>
        <tissue>Cervix carcinoma</tissue>
    </source>
</reference>
<reference key="45">
    <citation type="journal article" date="2011" name="BMC Syst. Biol.">
        <title>Initial characterization of the human central proteome.</title>
        <authorList>
            <person name="Burkard T.R."/>
            <person name="Planyavsky M."/>
            <person name="Kaupe I."/>
            <person name="Breitwieser F.P."/>
            <person name="Buerckstuemmer T."/>
            <person name="Bennett K.L."/>
            <person name="Superti-Furga G."/>
            <person name="Colinge J."/>
        </authorList>
    </citation>
    <scope>IDENTIFICATION BY MASS SPECTROMETRY [LARGE SCALE ANALYSIS]</scope>
</reference>
<reference key="46">
    <citation type="journal article" date="2011" name="Sci. Signal.">
        <title>System-wide temporal characterization of the proteome and phosphoproteome of human embryonic stem cell differentiation.</title>
        <authorList>
            <person name="Rigbolt K.T."/>
            <person name="Prokhorova T.A."/>
            <person name="Akimov V."/>
            <person name="Henningsen J."/>
            <person name="Johansen P.T."/>
            <person name="Kratchmarova I."/>
            <person name="Kassem M."/>
            <person name="Mann M."/>
            <person name="Olsen J.V."/>
            <person name="Blagoev B."/>
        </authorList>
    </citation>
    <scope>IDENTIFICATION BY MASS SPECTROMETRY [LARGE SCALE ANALYSIS]</scope>
</reference>
<reference key="47">
    <citation type="journal article" date="2012" name="J. Biol. Chem.">
        <title>The RING finger protein RNF8 ubiquitinates Nbs1 to promote DNA double-strand break repair by homologous recombination.</title>
        <authorList>
            <person name="Lu C.S."/>
            <person name="Truong L.N."/>
            <person name="Aslanian A."/>
            <person name="Shi L.Z."/>
            <person name="Li Y."/>
            <person name="Hwang P.Y."/>
            <person name="Koh K.H."/>
            <person name="Hunter T."/>
            <person name="Yates J.R. III"/>
            <person name="Berns M.W."/>
            <person name="Wu X."/>
        </authorList>
    </citation>
    <scope>FUNCTION</scope>
    <scope>UBIQUITINATION AT LYS-435</scope>
    <scope>SUBCELLULAR LOCATION</scope>
</reference>
<reference key="48">
    <citation type="journal article" date="2012" name="Mol. Cell">
        <title>Skp2 E3 ligase integrates ATM activation and homologous recombination repair by ubiquitinating NBS1.</title>
        <authorList>
            <person name="Wu J."/>
            <person name="Zhang X."/>
            <person name="Zhang L."/>
            <person name="Wu C.Y."/>
            <person name="Rezaeian A.H."/>
            <person name="Chan C.H."/>
            <person name="Li J.M."/>
            <person name="Wang J."/>
            <person name="Gao Y."/>
            <person name="Han F."/>
            <person name="Jeong Y.S."/>
            <person name="Yuan X."/>
            <person name="Khanna K.K."/>
            <person name="Jin J."/>
            <person name="Zeng Y.X."/>
            <person name="Lin H.K."/>
        </authorList>
    </citation>
    <scope>FUNCTION</scope>
    <scope>UBIQUITINATION AT LYS-735</scope>
    <scope>MUTAGENESIS OF LYS-735 AND LYS-751</scope>
</reference>
<reference key="49">
    <citation type="journal article" date="2013" name="J. Proteome Res.">
        <title>Toward a comprehensive characterization of a human cancer cell phosphoproteome.</title>
        <authorList>
            <person name="Zhou H."/>
            <person name="Di Palma S."/>
            <person name="Preisinger C."/>
            <person name="Peng M."/>
            <person name="Polat A.N."/>
            <person name="Heck A.J."/>
            <person name="Mohammed S."/>
        </authorList>
    </citation>
    <scope>PHOSPHORYLATION [LARGE SCALE ANALYSIS] AT THR-337; SER-343; SER-347; SER-397; SER-432; SER-509; SER-518 AND SER-673</scope>
    <scope>IDENTIFICATION BY MASS SPECTROMETRY [LARGE SCALE ANALYSIS]</scope>
    <source>
        <tissue>Cervix carcinoma</tissue>
        <tissue>Erythroleukemia</tissue>
    </source>
</reference>
<reference key="50">
    <citation type="journal article" date="2013" name="PLoS ONE">
        <title>Interaction between NBS1 and the mTOR/Rictor/SIN1 complex through specific domains.</title>
        <authorList>
            <person name="Wang J.Q."/>
            <person name="Chen J.H."/>
            <person name="Chen Y.C."/>
            <person name="Chen M.Y."/>
            <person name="Hsieh C.Y."/>
            <person name="Teng S.C."/>
            <person name="Wu K.J."/>
        </authorList>
    </citation>
    <scope>FUNCTION IN AKT1 PHOSPHORYLATION</scope>
    <scope>INTERACTION WITH MTOR; MAPKAP1 AND RICTOR</scope>
    <scope>INDUCTION BY IONIZING RADIATION</scope>
</reference>
<reference key="51">
    <citation type="journal article" date="2014" name="EMBO J.">
        <title>Rad17 recruits the MRE11-RAD50-NBS1 complex to regulate the cellular response to DNA double-strand breaks.</title>
        <authorList>
            <person name="Wang Q."/>
            <person name="Goldstein M."/>
            <person name="Alexander P."/>
            <person name="Wakeman T.P."/>
            <person name="Sun T."/>
            <person name="Feng J."/>
            <person name="Lou Z."/>
            <person name="Kastan M.B."/>
            <person name="Wang X.F."/>
        </authorList>
    </citation>
    <scope>FUNCTION</scope>
    <scope>INTERACTION WITH RAD17</scope>
    <scope>SUBCELLULAR LOCATION</scope>
</reference>
<reference key="52">
    <citation type="journal article" date="2014" name="J. Proteomics">
        <title>An enzyme assisted RP-RPLC approach for in-depth analysis of human liver phosphoproteome.</title>
        <authorList>
            <person name="Bian Y."/>
            <person name="Song C."/>
            <person name="Cheng K."/>
            <person name="Dong M."/>
            <person name="Wang F."/>
            <person name="Huang J."/>
            <person name="Sun D."/>
            <person name="Wang L."/>
            <person name="Ye M."/>
            <person name="Zou H."/>
        </authorList>
    </citation>
    <scope>PHOSPHORYLATION [LARGE SCALE ANALYSIS] AT SER-432</scope>
    <scope>IDENTIFICATION BY MASS SPECTROMETRY [LARGE SCALE ANALYSIS]</scope>
    <source>
        <tissue>Liver</tissue>
    </source>
</reference>
<reference key="53">
    <citation type="journal article" date="2015" name="Mol. Cell. Biol.">
        <title>Acetylation of histone H2AX at Lys 5 by the TIP60 histone acetyltransferase complex is essential for the dynamic binding of NBS1 to damaged chromatin.</title>
        <authorList>
            <person name="Ikura M."/>
            <person name="Furuya K."/>
            <person name="Matsuda S."/>
            <person name="Matsuda R."/>
            <person name="Shima H."/>
            <person name="Adachi J."/>
            <person name="Matsuda T."/>
            <person name="Shiraki T."/>
            <person name="Ikura T."/>
        </authorList>
    </citation>
    <scope>FUNCTION</scope>
    <scope>SUBCELLULAR LOCATION</scope>
</reference>
<reference key="54">
    <citation type="journal article" date="2015" name="Nat. Commun.">
        <title>MCM8-9 complex promotes resection of double-strand break ends by MRE11-RAD50-NBS1 complex.</title>
        <authorList>
            <person name="Lee K.Y."/>
            <person name="Im J.S."/>
            <person name="Shibata E."/>
            <person name="Park J."/>
            <person name="Handa N."/>
            <person name="Kowalczykowski S.C."/>
            <person name="Dutta A."/>
        </authorList>
    </citation>
    <scope>IDENTIFICATION IN THE MRN COMPLEX</scope>
    <scope>INTERACTION WITH MCM9</scope>
    <scope>SUBCELLULAR LOCATION</scope>
</reference>
<reference key="55">
    <citation type="journal article" date="2016" name="Cell Rep.">
        <title>MRNIP/C5orf45 interacts with the MRN complex and contributes to the DNA damage response.</title>
        <authorList>
            <person name="Staples C.J."/>
            <person name="Barone G."/>
            <person name="Myers K.N."/>
            <person name="Ganesh A."/>
            <person name="Gibbs-Seymour I."/>
            <person name="Patil A.A."/>
            <person name="Beveridge R.D."/>
            <person name="Daye C."/>
            <person name="Beniston R."/>
            <person name="Maslen S."/>
            <person name="Ahel I."/>
            <person name="Skehel J.M."/>
            <person name="Collis S.J."/>
        </authorList>
    </citation>
    <scope>INTERACTION WITH MRNIP</scope>
</reference>
<reference key="56">
    <citation type="journal article" date="2016" name="Mol. Cell">
        <title>Nbs1 converts the human Mre11/Rad50 nuclease complex into an endo/exonuclease machine specific for protein-DNA adducts.</title>
        <authorList>
            <person name="Deshpande R.A."/>
            <person name="Lee J.H."/>
            <person name="Arora S."/>
            <person name="Paull T.T."/>
        </authorList>
    </citation>
    <scope>FUNCTION</scope>
    <scope>INTERACTION WITH RBBP8</scope>
</reference>
<reference key="57">
    <citation type="journal article" date="2016" name="Mol. Cell">
        <title>Phosphorylated CtIP functions as a co-factor of the MRE11-RAD50-NBS1 endonuclease in DNA end resection.</title>
        <authorList>
            <person name="Anand R."/>
            <person name="Ranjha L."/>
            <person name="Cannavo E."/>
            <person name="Cejka P."/>
        </authorList>
    </citation>
    <scope>FUNCTION</scope>
    <scope>INTERACTION WITH RBBP8</scope>
</reference>
<reference key="58">
    <citation type="journal article" date="2017" name="Mol. Cell">
        <title>Single-molecule imaging reveals how Mre11-Rad50-Nbs1 initiates DNA break repair.</title>
        <authorList>
            <person name="Myler L.R."/>
            <person name="Gallardo I.F."/>
            <person name="Soniat M.M."/>
            <person name="Deshpande R.A."/>
            <person name="Gonzalez X.B."/>
            <person name="Kim Y."/>
            <person name="Paull T.T."/>
            <person name="Finkelstein I.J."/>
        </authorList>
    </citation>
    <scope>FUNCTION</scope>
    <scope>IDENTIFICATION IN THE MRN COMPLEX</scope>
</reference>
<reference key="59">
    <citation type="journal article" date="2017" name="Nat. Struct. Mol. Biol.">
        <title>Site-specific mapping of the human SUMO proteome reveals co-modification with phosphorylation.</title>
        <authorList>
            <person name="Hendriks I.A."/>
            <person name="Lyon D."/>
            <person name="Young C."/>
            <person name="Jensen L.J."/>
            <person name="Vertegaal A.C."/>
            <person name="Nielsen M.L."/>
        </authorList>
    </citation>
    <scope>SUMOYLATION [LARGE SCALE ANALYSIS] AT LYS-529; LYS-571 AND LYS-582</scope>
    <scope>IDENTIFICATION BY MASS SPECTROMETRY [LARGE SCALE ANALYSIS]</scope>
</reference>
<reference key="60">
    <citation type="journal article" date="2019" name="Nat. Commun.">
        <title>UFL1 promotes histone H4 ufmylation and ATM activation.</title>
        <authorList>
            <person name="Qin B."/>
            <person name="Yu J."/>
            <person name="Nowsheen S."/>
            <person name="Wang M."/>
            <person name="Tu X."/>
            <person name="Liu T."/>
            <person name="Li H."/>
            <person name="Wang L."/>
            <person name="Lou Z."/>
        </authorList>
    </citation>
    <scope>INTERACTION WITH UFL1</scope>
</reference>
<reference key="61">
    <citation type="journal article" date="2019" name="EMBO J.">
        <title>NBS1 promotes the endonuclease activity of the MRE11-RAD50 complex by sensing CtIP phosphorylation.</title>
        <authorList>
            <person name="Anand R."/>
            <person name="Jasrotia A."/>
            <person name="Bundschuh D."/>
            <person name="Howard S.M."/>
            <person name="Ranjha L."/>
            <person name="Stucki M."/>
            <person name="Cejka P."/>
        </authorList>
    </citation>
    <scope>FUNCTION</scope>
    <scope>INTERACTION WITH RBBP8</scope>
    <scope>MUTAGENESIS OF ARG-28; ARG-43; HIS-45 AND LYS-160</scope>
</reference>
<reference key="62">
    <citation type="journal article" date="2019" name="Nat. Commun.">
        <title>Pellino1 regulates reversible ATM activation via NBS1 ubiquitination at DNA double-strand breaks.</title>
        <authorList>
            <person name="Ha G.H."/>
            <person name="Ji J.H."/>
            <person name="Chae S."/>
            <person name="Park J."/>
            <person name="Kim S."/>
            <person name="Lee J.K."/>
            <person name="Kim Y."/>
            <person name="Min S."/>
            <person name="Park J.M."/>
            <person name="Kang T.H."/>
            <person name="Lee H."/>
            <person name="Cho H."/>
            <person name="Lee C.W."/>
        </authorList>
    </citation>
    <scope>FUNCTION</scope>
    <scope>UBIQUITINATION AT LYS-686 AND LYS-690</scope>
    <scope>MUTAGENESIS OF LYS-665; LYS-683 AND 686-LYS--LYS-690</scope>
</reference>
<reference key="63">
    <citation type="journal article" date="2019" name="Nat. Commun.">
        <title>MRE11-RAD50-NBS1 promotes Fanconi Anemia R-loop suppression at transcription-replication conflicts.</title>
        <authorList>
            <person name="Chang E.Y."/>
            <person name="Tsai S."/>
            <person name="Aristizabal M.J."/>
            <person name="Wells J.P."/>
            <person name="Coulombe Y."/>
            <person name="Busatto F.F."/>
            <person name="Chan Y.A."/>
            <person name="Kumar A."/>
            <person name="Dan Zhu Y."/>
            <person name="Wang A.Y."/>
            <person name="Fournier L.A."/>
            <person name="Hieter P."/>
            <person name="Kobor M.S."/>
            <person name="Masson J.Y."/>
            <person name="Stirling P.C."/>
        </authorList>
    </citation>
    <scope>FUNCTION</scope>
</reference>
<reference key="64">
    <citation type="journal article" date="2021" name="Proc. Natl. Acad. Sci. U.S.A.">
        <title>A conserved Ctp1/CtIP C-terminal peptide stimulates Mre11 endonuclease activity.</title>
        <authorList>
            <person name="Zdravkovic A."/>
            <person name="Daley J.M."/>
            <person name="Dutta A."/>
            <person name="Niwa T."/>
            <person name="Murayama Y."/>
            <person name="Kanamaru S."/>
            <person name="Ito K."/>
            <person name="Maki T."/>
            <person name="Argunhan B."/>
            <person name="Takahashi M."/>
            <person name="Tsubouchi H."/>
            <person name="Sung P."/>
            <person name="Iwasaki H."/>
        </authorList>
    </citation>
    <scope>FUNCTION</scope>
    <scope>INTERACTION WITH RBBP8</scope>
</reference>
<reference key="65">
    <citation type="journal article" date="2024" name="Nature">
        <title>NBS1 lactylation is required for efficient DNA repair and chemotherapy resistance.</title>
        <authorList>
            <person name="Chen H."/>
            <person name="Li Y."/>
            <person name="Li H."/>
            <person name="Chen X."/>
            <person name="Fu H."/>
            <person name="Mao D."/>
            <person name="Chen W."/>
            <person name="Lan L."/>
            <person name="Wang C."/>
            <person name="Hu K."/>
            <person name="Li J."/>
            <person name="Zhu C."/>
            <person name="Evans I."/>
            <person name="Cheung E."/>
            <person name="Lu D."/>
            <person name="He Y."/>
            <person name="Behrens A."/>
            <person name="Yin D."/>
            <person name="Zhang C."/>
        </authorList>
    </citation>
    <scope>LACTYLATION AT LYS-388</scope>
    <scope>MUTAGENESIS OF LYS-388</scope>
</reference>
<reference evidence="65" key="66">
    <citation type="journal article" date="2017" name="Mol. Cell">
        <title>NBS1 phosphorylation status dictates repair choice of dysfunctional telomeres.</title>
        <authorList>
            <person name="Rai R."/>
            <person name="Hu C."/>
            <person name="Broton C."/>
            <person name="Chen Y."/>
            <person name="Lei M."/>
            <person name="Chang S."/>
        </authorList>
    </citation>
    <scope>X-RAY CRYSTALLOGRAPHY (3.00 ANGSTROMS) OF 423-438 IN COMPLEX WITH TERF2</scope>
    <scope>FUNCTION</scope>
    <scope>SUBCELLULAR LOCATION</scope>
    <scope>INTERACTION WITH TERF2</scope>
    <scope>PHOSPHORYLATION AT 432</scope>
    <scope>MUTAGENESIS OF SER-432</scope>
</reference>
<reference evidence="66" key="67">
    <citation type="journal article" date="2022" name="Elife">
        <title>Structure of the human ATM kinase and mechanism of Nbs1 binding.</title>
        <authorList>
            <person name="Warren C."/>
            <person name="Pavletich N.P."/>
        </authorList>
    </citation>
    <scope>STRUCTURE BY ELECTRON MICROSCOPY (2.53 ANGSTROMS) OF 727-754 IN COMPLEX WITH ATM</scope>
    <scope>FUNCTION</scope>
    <scope>INTERACTION WITH ATM</scope>
    <scope>MUTAGENESIS OF 744-PHE--TYR-746; PHE-744; ARG-745 AND TYR-746</scope>
</reference>
<reference evidence="67" key="68">
    <citation type="journal article" date="2023" name="Mol. Cell">
        <title>Cryo-EM structure of the Mre11-Rad50-Nbs1 complex reveals the molecular mechanism of scaffolding functions.</title>
        <authorList>
            <person name="Rotheneder M."/>
            <person name="Stakyte K."/>
            <person name="van de Logt E."/>
            <person name="Bartho J.D."/>
            <person name="Lammens K."/>
            <person name="Fan Y."/>
            <person name="Alt A."/>
            <person name="Kessler B."/>
            <person name="Jung C."/>
            <person name="Roos W.P."/>
            <person name="Steigenberger B."/>
            <person name="Hopfner K.P."/>
        </authorList>
    </citation>
    <scope>STRUCTURE BY ELECTRON MICROSCOPY (4.13 ANGSTROMS) IN COMPLEX WITH MRE11</scope>
    <scope>IDENTIFICATION IN THE MRE11 COMPLEX</scope>
    <scope>SUBUNIT</scope>
</reference>
<reference key="69">
    <citation type="journal article" date="2001" name="Cancer Res.">
        <title>Mutations in the Nijmegen breakage syndrome gene (NBS1) in childhood acute lymphoblastic leukemia (ALL).</title>
        <authorList>
            <person name="Varon R."/>
            <person name="Reis A."/>
            <person name="Henze G."/>
            <person name="von Einsiedel H.G."/>
            <person name="Sperling K."/>
            <person name="Seeger K."/>
        </authorList>
    </citation>
    <scope>VARIANTS LEU-93; ASN-95; VAL-171; PHE-210 AND TRP-215</scope>
    <scope>POSSIBLE INVOLVEMENT IN CHILDHOOD ACUTE LYMPHOBLASTIC LEUKEMIA</scope>
</reference>
<reference key="70">
    <citation type="journal article" date="2003" name="J. Med. Genet.">
        <title>Mutation screening of Mre11 complex genes: indication of RAD50 involvement in breast and ovarian cancer susceptibility.</title>
        <authorList>
            <person name="Heikkinen K."/>
            <person name="Karppinen S.-M."/>
            <person name="Soini Y."/>
            <person name="Maekinen M."/>
            <person name="Winqvist R."/>
        </authorList>
    </citation>
    <scope>VARIANT BC PHE-150</scope>
    <scope>VARIANTS GLN-185 AND ILE-574</scope>
</reference>
<reference key="71">
    <citation type="journal article" date="2004" name="Carcinogenesis">
        <title>Polymorphisms in DNA repair and metabolic genes in bladder cancer.</title>
        <authorList>
            <person name="Sanyal S."/>
            <person name="Festa F."/>
            <person name="Sakano S."/>
            <person name="Zhang Z."/>
            <person name="Steineck G."/>
            <person name="Norming U."/>
            <person name="Wijkstroem H."/>
            <person name="Larsson P."/>
            <person name="Kumar R."/>
            <person name="Hemminki K."/>
        </authorList>
    </citation>
    <scope>VARIANT GLN-185</scope>
</reference>
<reference key="72">
    <citation type="journal article" date="2004" name="Hum. Genet.">
        <title>First case of aplastic anemia in a Japanese child with a homozygous missense mutation in the NBS1 gene (I171V) associated with genomic instability.</title>
        <authorList>
            <person name="Shimada H."/>
            <person name="Shimizu K."/>
            <person name="Mimaki S."/>
            <person name="Sakiyama T."/>
            <person name="Mori T."/>
            <person name="Shimasaki N."/>
            <person name="Yokota J."/>
            <person name="Nakachi K."/>
            <person name="Ohta T."/>
            <person name="Ohki M."/>
        </authorList>
    </citation>
    <scope>POSSIBLE INVOLVEMENT IN AA</scope>
    <scope>VARIANT VAL-171</scope>
</reference>
<reference key="73">
    <citation type="journal article" date="2011" name="Nature">
        <title>Exome sequencing identifies frequent mutation of the SWI/SNF complex gene PBRM1 in renal carcinoma.</title>
        <authorList>
            <person name="Varela I."/>
            <person name="Tarpey P."/>
            <person name="Raine K."/>
            <person name="Huang D."/>
            <person name="Ong C.K."/>
            <person name="Stephens P."/>
            <person name="Davies H."/>
            <person name="Jones D."/>
            <person name="Lin M.L."/>
            <person name="Teague J."/>
            <person name="Bignell G."/>
            <person name="Butler A."/>
            <person name="Cho J."/>
            <person name="Dalgliesh G.L."/>
            <person name="Galappaththige D."/>
            <person name="Greenman C."/>
            <person name="Hardy C."/>
            <person name="Jia M."/>
            <person name="Latimer C."/>
            <person name="Lau K.W."/>
            <person name="Marshall J."/>
            <person name="McLaren S."/>
            <person name="Menzies A."/>
            <person name="Mudie L."/>
            <person name="Stebbings L."/>
            <person name="Largaespada D.A."/>
            <person name="Wessels L.F.A."/>
            <person name="Richard S."/>
            <person name="Kahnoski R.J."/>
            <person name="Anema J."/>
            <person name="Tuveson D.A."/>
            <person name="Perez-Mancera P.A."/>
            <person name="Mustonen V."/>
            <person name="Fischer A."/>
            <person name="Adams D.J."/>
            <person name="Rust A."/>
            <person name="Chan-On W."/>
            <person name="Subimerb C."/>
            <person name="Dykema K."/>
            <person name="Furge K."/>
            <person name="Campbell P.J."/>
            <person name="Teh B.T."/>
            <person name="Stratton M.R."/>
            <person name="Futreal P.A."/>
        </authorList>
    </citation>
    <scope>VARIANT HIS-679</scope>
</reference>
<dbReference type="EMBL" id="AF051334">
    <property type="protein sequence ID" value="AAC39732.1"/>
    <property type="molecule type" value="mRNA"/>
</dbReference>
<dbReference type="EMBL" id="AF058696">
    <property type="protein sequence ID" value="AAC39752.1"/>
    <property type="molecule type" value="mRNA"/>
</dbReference>
<dbReference type="EMBL" id="AB013139">
    <property type="protein sequence ID" value="BAA28616.1"/>
    <property type="molecule type" value="Genomic_DNA"/>
</dbReference>
<dbReference type="EMBL" id="AF069291">
    <property type="protein sequence ID" value="AAC62232.1"/>
    <property type="molecule type" value="Genomic_DNA"/>
</dbReference>
<dbReference type="EMBL" id="AK312410">
    <property type="protein sequence ID" value="BAG35323.1"/>
    <property type="molecule type" value="mRNA"/>
</dbReference>
<dbReference type="EMBL" id="AK223256">
    <property type="protein sequence ID" value="BAD96976.1"/>
    <property type="molecule type" value="mRNA"/>
</dbReference>
<dbReference type="EMBL" id="AY566246">
    <property type="protein sequence ID" value="AAS59158.1"/>
    <property type="molecule type" value="Genomic_DNA"/>
</dbReference>
<dbReference type="EMBL" id="CH471060">
    <property type="protein sequence ID" value="EAW91660.1"/>
    <property type="molecule type" value="Genomic_DNA"/>
</dbReference>
<dbReference type="EMBL" id="BC108650">
    <property type="protein sequence ID" value="AAI08651.1"/>
    <property type="status" value="ALT_SEQ"/>
    <property type="molecule type" value="mRNA"/>
</dbReference>
<dbReference type="EMBL" id="BC136802">
    <property type="protein sequence ID" value="AAI36803.1"/>
    <property type="molecule type" value="mRNA"/>
</dbReference>
<dbReference type="EMBL" id="BC136803">
    <property type="protein sequence ID" value="AAI36804.1"/>
    <property type="molecule type" value="mRNA"/>
</dbReference>
<dbReference type="EMBL" id="BX640816">
    <property type="protein sequence ID" value="CAH56160.1"/>
    <property type="status" value="ALT_INIT"/>
    <property type="molecule type" value="mRNA"/>
</dbReference>
<dbReference type="CCDS" id="CCDS6249.1"/>
<dbReference type="PIR" id="T00393">
    <property type="entry name" value="T00393"/>
</dbReference>
<dbReference type="RefSeq" id="NP_001019859.1">
    <property type="nucleotide sequence ID" value="NM_001024688.2"/>
</dbReference>
<dbReference type="RefSeq" id="NP_002476.2">
    <property type="nucleotide sequence ID" value="NM_002485.4"/>
</dbReference>
<dbReference type="RefSeq" id="XP_011515347.1">
    <property type="nucleotide sequence ID" value="XM_011517045.1"/>
</dbReference>
<dbReference type="PDB" id="5WQD">
    <property type="method" value="X-ray"/>
    <property type="resolution" value="3.00 A"/>
    <property type="chains" value="H/I/J/K/L/M/N=423-438"/>
</dbReference>
<dbReference type="PDB" id="7SID">
    <property type="method" value="EM"/>
    <property type="resolution" value="2.53 A"/>
    <property type="chains" value="B/D=727-754"/>
</dbReference>
<dbReference type="PDB" id="8BAH">
    <property type="method" value="EM"/>
    <property type="resolution" value="4.13 A"/>
    <property type="chains" value="C=1-754"/>
</dbReference>
<dbReference type="PDBsum" id="5WQD"/>
<dbReference type="PDBsum" id="7SID"/>
<dbReference type="PDBsum" id="8BAH"/>
<dbReference type="EMDB" id="EMD-15948"/>
<dbReference type="EMDB" id="EMD-25141"/>
<dbReference type="SMR" id="O60934"/>
<dbReference type="BioGRID" id="110763">
    <property type="interactions" value="187"/>
</dbReference>
<dbReference type="ComplexPortal" id="CPX-4442">
    <property type="entry name" value="MRN double-strand break repair complex"/>
</dbReference>
<dbReference type="CORUM" id="O60934"/>
<dbReference type="DIP" id="DIP-33605N"/>
<dbReference type="ELM" id="O60934"/>
<dbReference type="FunCoup" id="O60934">
    <property type="interactions" value="2727"/>
</dbReference>
<dbReference type="IntAct" id="O60934">
    <property type="interactions" value="74"/>
</dbReference>
<dbReference type="MINT" id="O60934"/>
<dbReference type="STRING" id="9606.ENSP00000265433"/>
<dbReference type="ChEMBL" id="CHEMBL5169101"/>
<dbReference type="GlyGen" id="O60934">
    <property type="glycosylation" value="3 sites, 1 N-linked glycan (1 site), 1 O-linked glycan (1 site)"/>
</dbReference>
<dbReference type="iPTMnet" id="O60934"/>
<dbReference type="MetOSite" id="O60934"/>
<dbReference type="PhosphoSitePlus" id="O60934"/>
<dbReference type="SwissPalm" id="O60934"/>
<dbReference type="BioMuta" id="NBN"/>
<dbReference type="CPTAC" id="CPTAC-3236"/>
<dbReference type="CPTAC" id="CPTAC-3237"/>
<dbReference type="CPTAC" id="CPTAC-3238"/>
<dbReference type="CPTAC" id="CPTAC-3239"/>
<dbReference type="CPTAC" id="CPTAC-934"/>
<dbReference type="CPTAC" id="CPTAC-935"/>
<dbReference type="jPOST" id="O60934"/>
<dbReference type="MassIVE" id="O60934"/>
<dbReference type="PaxDb" id="9606-ENSP00000265433"/>
<dbReference type="PeptideAtlas" id="O60934"/>
<dbReference type="ProteomicsDB" id="49678"/>
<dbReference type="Pumba" id="O60934"/>
<dbReference type="Antibodypedia" id="690">
    <property type="antibodies" value="1603 antibodies from 48 providers"/>
</dbReference>
<dbReference type="CPTC" id="O60934">
    <property type="antibodies" value="4 antibodies"/>
</dbReference>
<dbReference type="DNASU" id="4683"/>
<dbReference type="Ensembl" id="ENST00000265433.8">
    <property type="protein sequence ID" value="ENSP00000265433.4"/>
    <property type="gene ID" value="ENSG00000104320.15"/>
</dbReference>
<dbReference type="Ensembl" id="ENST00000697292.1">
    <property type="protein sequence ID" value="ENSP00000513229.1"/>
    <property type="gene ID" value="ENSG00000104320.15"/>
</dbReference>
<dbReference type="Ensembl" id="ENST00000697310.1">
    <property type="protein sequence ID" value="ENSP00000513245.1"/>
    <property type="gene ID" value="ENSG00000104320.15"/>
</dbReference>
<dbReference type="GeneID" id="4683"/>
<dbReference type="KEGG" id="hsa:4683"/>
<dbReference type="MANE-Select" id="ENST00000265433.8">
    <property type="protein sequence ID" value="ENSP00000265433.4"/>
    <property type="RefSeq nucleotide sequence ID" value="NM_002485.5"/>
    <property type="RefSeq protein sequence ID" value="NP_002476.2"/>
</dbReference>
<dbReference type="UCSC" id="uc003yej.2">
    <property type="organism name" value="human"/>
</dbReference>
<dbReference type="AGR" id="HGNC:7652"/>
<dbReference type="CTD" id="4683"/>
<dbReference type="DisGeNET" id="4683"/>
<dbReference type="GeneCards" id="NBN"/>
<dbReference type="GeneReviews" id="NBN"/>
<dbReference type="HGNC" id="HGNC:7652">
    <property type="gene designation" value="NBN"/>
</dbReference>
<dbReference type="HPA" id="ENSG00000104320">
    <property type="expression patterns" value="Low tissue specificity"/>
</dbReference>
<dbReference type="MalaCards" id="NBN"/>
<dbReference type="MIM" id="114480">
    <property type="type" value="phenotype"/>
</dbReference>
<dbReference type="MIM" id="251260">
    <property type="type" value="phenotype"/>
</dbReference>
<dbReference type="MIM" id="602667">
    <property type="type" value="gene"/>
</dbReference>
<dbReference type="MIM" id="609135">
    <property type="type" value="phenotype"/>
</dbReference>
<dbReference type="neXtProt" id="NX_O60934"/>
<dbReference type="OpenTargets" id="ENSG00000104320"/>
<dbReference type="Orphanet" id="1331">
    <property type="disease" value="Familial prostate cancer"/>
</dbReference>
<dbReference type="Orphanet" id="145">
    <property type="disease" value="Hereditary breast and/or ovarian cancer syndrome"/>
</dbReference>
<dbReference type="Orphanet" id="647">
    <property type="disease" value="Nijmegen breakage syndrome"/>
</dbReference>
<dbReference type="PharmGKB" id="PA31457"/>
<dbReference type="VEuPathDB" id="HostDB:ENSG00000104320"/>
<dbReference type="eggNOG" id="ENOG502QQ7Y">
    <property type="taxonomic scope" value="Eukaryota"/>
</dbReference>
<dbReference type="GeneTree" id="ENSGT00390000000521"/>
<dbReference type="HOGENOM" id="CLU_023410_0_0_1"/>
<dbReference type="InParanoid" id="O60934"/>
<dbReference type="OMA" id="KKNFKMF"/>
<dbReference type="OrthoDB" id="552194at2759"/>
<dbReference type="PAN-GO" id="O60934">
    <property type="GO annotations" value="5 GO annotations based on evolutionary models"/>
</dbReference>
<dbReference type="PhylomeDB" id="O60934"/>
<dbReference type="TreeFam" id="TF101103"/>
<dbReference type="PathwayCommons" id="O60934"/>
<dbReference type="Reactome" id="R-HSA-2559586">
    <property type="pathway name" value="DNA Damage/Telomere Stress Induced Senescence"/>
</dbReference>
<dbReference type="Reactome" id="R-HSA-5685938">
    <property type="pathway name" value="HDR through Single Strand Annealing (SSA)"/>
</dbReference>
<dbReference type="Reactome" id="R-HSA-5685939">
    <property type="pathway name" value="HDR through MMEJ (alt-NHEJ)"/>
</dbReference>
<dbReference type="Reactome" id="R-HSA-5685942">
    <property type="pathway name" value="HDR through Homologous Recombination (HRR)"/>
</dbReference>
<dbReference type="Reactome" id="R-HSA-5693548">
    <property type="pathway name" value="Sensing of DNA Double Strand Breaks"/>
</dbReference>
<dbReference type="Reactome" id="R-HSA-5693554">
    <property type="pathway name" value="Resolution of D-loop Structures through Synthesis-Dependent Strand Annealing (SDSA)"/>
</dbReference>
<dbReference type="Reactome" id="R-HSA-5693565">
    <property type="pathway name" value="Recruitment and ATM-mediated phosphorylation of repair and signaling proteins at DNA double strand breaks"/>
</dbReference>
<dbReference type="Reactome" id="R-HSA-5693568">
    <property type="pathway name" value="Resolution of D-loop Structures through Holliday Junction Intermediates"/>
</dbReference>
<dbReference type="Reactome" id="R-HSA-5693571">
    <property type="pathway name" value="Nonhomologous End-Joining (NHEJ)"/>
</dbReference>
<dbReference type="Reactome" id="R-HSA-5693579">
    <property type="pathway name" value="Homologous DNA Pairing and Strand Exchange"/>
</dbReference>
<dbReference type="Reactome" id="R-HSA-5693607">
    <property type="pathway name" value="Processing of DNA double-strand break ends"/>
</dbReference>
<dbReference type="Reactome" id="R-HSA-5693616">
    <property type="pathway name" value="Presynaptic phase of homologous DNA pairing and strand exchange"/>
</dbReference>
<dbReference type="Reactome" id="R-HSA-6804756">
    <property type="pathway name" value="Regulation of TP53 Activity through Phosphorylation"/>
</dbReference>
<dbReference type="Reactome" id="R-HSA-69473">
    <property type="pathway name" value="G2/M DNA damage checkpoint"/>
</dbReference>
<dbReference type="Reactome" id="R-HSA-912446">
    <property type="pathway name" value="Meiotic recombination"/>
</dbReference>
<dbReference type="Reactome" id="R-HSA-9701192">
    <property type="pathway name" value="Defective homologous recombination repair (HRR) due to BRCA1 loss of function"/>
</dbReference>
<dbReference type="Reactome" id="R-HSA-9704331">
    <property type="pathway name" value="Defective HDR through Homologous Recombination Repair (HRR) due to PALB2 loss of BRCA1 binding function"/>
</dbReference>
<dbReference type="Reactome" id="R-HSA-9704646">
    <property type="pathway name" value="Defective HDR through Homologous Recombination Repair (HRR) due to PALB2 loss of BRCA2/RAD51/RAD51C binding function"/>
</dbReference>
<dbReference type="Reactome" id="R-HSA-9709570">
    <property type="pathway name" value="Impaired BRCA2 binding to RAD51"/>
</dbReference>
<dbReference type="Reactome" id="R-HSA-9709603">
    <property type="pathway name" value="Impaired BRCA2 binding to PALB2"/>
</dbReference>
<dbReference type="SignaLink" id="O60934"/>
<dbReference type="SIGNOR" id="O60934"/>
<dbReference type="BioGRID-ORCS" id="4683">
    <property type="hits" value="46 hits in 1168 CRISPR screens"/>
</dbReference>
<dbReference type="CD-CODE" id="8C2F96ED">
    <property type="entry name" value="Centrosome"/>
</dbReference>
<dbReference type="CD-CODE" id="B5B9A610">
    <property type="entry name" value="PML body"/>
</dbReference>
<dbReference type="ChiTaRS" id="NBN">
    <property type="organism name" value="human"/>
</dbReference>
<dbReference type="GeneWiki" id="Nibrin"/>
<dbReference type="GenomeRNAi" id="4683"/>
<dbReference type="Pharos" id="O60934">
    <property type="development level" value="Tbio"/>
</dbReference>
<dbReference type="PRO" id="PR:O60934"/>
<dbReference type="Proteomes" id="UP000005640">
    <property type="component" value="Chromosome 8"/>
</dbReference>
<dbReference type="RNAct" id="O60934">
    <property type="molecule type" value="protein"/>
</dbReference>
<dbReference type="Bgee" id="ENSG00000104320">
    <property type="expression patterns" value="Expressed in endometrium epithelium and 211 other cell types or tissues"/>
</dbReference>
<dbReference type="ExpressionAtlas" id="O60934">
    <property type="expression patterns" value="baseline and differential"/>
</dbReference>
<dbReference type="GO" id="GO:0070533">
    <property type="term" value="C:BRCA1-C complex"/>
    <property type="evidence" value="ECO:0000353"/>
    <property type="project" value="ComplexPortal"/>
</dbReference>
<dbReference type="GO" id="GO:0098687">
    <property type="term" value="C:chromosomal region"/>
    <property type="evidence" value="ECO:0000303"/>
    <property type="project" value="ComplexPortal"/>
</dbReference>
<dbReference type="GO" id="GO:0000781">
    <property type="term" value="C:chromosome, telomeric region"/>
    <property type="evidence" value="ECO:0000314"/>
    <property type="project" value="UniProtKB"/>
</dbReference>
<dbReference type="GO" id="GO:0005829">
    <property type="term" value="C:cytosol"/>
    <property type="evidence" value="ECO:0000304"/>
    <property type="project" value="Reactome"/>
</dbReference>
<dbReference type="GO" id="GO:0005794">
    <property type="term" value="C:Golgi apparatus"/>
    <property type="evidence" value="ECO:0000314"/>
    <property type="project" value="HPA"/>
</dbReference>
<dbReference type="GO" id="GO:0030870">
    <property type="term" value="C:Mre11 complex"/>
    <property type="evidence" value="ECO:0000314"/>
    <property type="project" value="UniProtKB"/>
</dbReference>
<dbReference type="GO" id="GO:0042405">
    <property type="term" value="C:nuclear inclusion body"/>
    <property type="evidence" value="ECO:0000314"/>
    <property type="project" value="UniProtKB"/>
</dbReference>
<dbReference type="GO" id="GO:0005730">
    <property type="term" value="C:nucleolus"/>
    <property type="evidence" value="ECO:0000314"/>
    <property type="project" value="BHF-UCL"/>
</dbReference>
<dbReference type="GO" id="GO:0005654">
    <property type="term" value="C:nucleoplasm"/>
    <property type="evidence" value="ECO:0000314"/>
    <property type="project" value="HPA"/>
</dbReference>
<dbReference type="GO" id="GO:0005634">
    <property type="term" value="C:nucleus"/>
    <property type="evidence" value="ECO:0000314"/>
    <property type="project" value="BHF-UCL"/>
</dbReference>
<dbReference type="GO" id="GO:0016605">
    <property type="term" value="C:PML body"/>
    <property type="evidence" value="ECO:0000314"/>
    <property type="project" value="UniProtKB"/>
</dbReference>
<dbReference type="GO" id="GO:0005657">
    <property type="term" value="C:replication fork"/>
    <property type="evidence" value="ECO:0007669"/>
    <property type="project" value="Ensembl"/>
</dbReference>
<dbReference type="GO" id="GO:0035861">
    <property type="term" value="C:site of double-strand break"/>
    <property type="evidence" value="ECO:0000314"/>
    <property type="project" value="UniProtKB"/>
</dbReference>
<dbReference type="GO" id="GO:0140463">
    <property type="term" value="F:chromatin-protein adaptor activity"/>
    <property type="evidence" value="ECO:0000314"/>
    <property type="project" value="UniProtKB"/>
</dbReference>
<dbReference type="GO" id="GO:0003684">
    <property type="term" value="F:damaged DNA binding"/>
    <property type="evidence" value="ECO:0000318"/>
    <property type="project" value="GO_Central"/>
</dbReference>
<dbReference type="GO" id="GO:0140297">
    <property type="term" value="F:DNA-binding transcription factor binding"/>
    <property type="evidence" value="ECO:0000353"/>
    <property type="project" value="UniProtKB"/>
</dbReference>
<dbReference type="GO" id="GO:0042393">
    <property type="term" value="F:histone binding"/>
    <property type="evidence" value="ECO:0000353"/>
    <property type="project" value="UniProtKB"/>
</dbReference>
<dbReference type="GO" id="GO:0140031">
    <property type="term" value="F:phosphorylation-dependent protein binding"/>
    <property type="evidence" value="ECO:0000314"/>
    <property type="project" value="UniProtKB"/>
</dbReference>
<dbReference type="GO" id="GO:0043539">
    <property type="term" value="F:protein serine/threonine kinase activator activity"/>
    <property type="evidence" value="ECO:0000314"/>
    <property type="project" value="UniProtKB"/>
</dbReference>
<dbReference type="GO" id="GO:0001832">
    <property type="term" value="P:blastocyst growth"/>
    <property type="evidence" value="ECO:0007669"/>
    <property type="project" value="Ensembl"/>
</dbReference>
<dbReference type="GO" id="GO:0000077">
    <property type="term" value="P:DNA damage checkpoint signaling"/>
    <property type="evidence" value="ECO:0000314"/>
    <property type="project" value="MGI"/>
</dbReference>
<dbReference type="GO" id="GO:0030330">
    <property type="term" value="P:DNA damage response, signal transduction by p53 class mediator"/>
    <property type="evidence" value="ECO:0000304"/>
    <property type="project" value="UniProtKB"/>
</dbReference>
<dbReference type="GO" id="GO:0000729">
    <property type="term" value="P:DNA double-strand break processing"/>
    <property type="evidence" value="ECO:0000314"/>
    <property type="project" value="UniProtKB"/>
</dbReference>
<dbReference type="GO" id="GO:0110025">
    <property type="term" value="P:DNA strand resection involved in replication fork processing"/>
    <property type="evidence" value="ECO:0000314"/>
    <property type="project" value="UniProtKB"/>
</dbReference>
<dbReference type="GO" id="GO:0006302">
    <property type="term" value="P:double-strand break repair"/>
    <property type="evidence" value="ECO:0000314"/>
    <property type="project" value="UniProtKB"/>
</dbReference>
<dbReference type="GO" id="GO:0097681">
    <property type="term" value="P:double-strand break repair via alternative nonhomologous end joining"/>
    <property type="evidence" value="ECO:0000314"/>
    <property type="project" value="UniProtKB"/>
</dbReference>
<dbReference type="GO" id="GO:0000724">
    <property type="term" value="P:double-strand break repair via homologous recombination"/>
    <property type="evidence" value="ECO:0000314"/>
    <property type="project" value="UniProtKB"/>
</dbReference>
<dbReference type="GO" id="GO:0035825">
    <property type="term" value="P:homologous recombination"/>
    <property type="evidence" value="ECO:0000303"/>
    <property type="project" value="ComplexPortal"/>
</dbReference>
<dbReference type="GO" id="GO:0097193">
    <property type="term" value="P:intrinsic apoptotic signaling pathway"/>
    <property type="evidence" value="ECO:0007669"/>
    <property type="project" value="Ensembl"/>
</dbReference>
<dbReference type="GO" id="GO:0045190">
    <property type="term" value="P:isotype switching"/>
    <property type="evidence" value="ECO:0007669"/>
    <property type="project" value="Ensembl"/>
</dbReference>
<dbReference type="GO" id="GO:0051321">
    <property type="term" value="P:meiotic cell cycle"/>
    <property type="evidence" value="ECO:0007669"/>
    <property type="project" value="UniProtKB-KW"/>
</dbReference>
<dbReference type="GO" id="GO:0007095">
    <property type="term" value="P:mitotic G2 DNA damage checkpoint signaling"/>
    <property type="evidence" value="ECO:0000314"/>
    <property type="project" value="UniProtKB"/>
</dbReference>
<dbReference type="GO" id="GO:0044818">
    <property type="term" value="P:mitotic G2/M transition checkpoint"/>
    <property type="evidence" value="ECO:0000303"/>
    <property type="project" value="ComplexPortal"/>
</dbReference>
<dbReference type="GO" id="GO:1904354">
    <property type="term" value="P:negative regulation of telomere capping"/>
    <property type="evidence" value="ECO:0000315"/>
    <property type="project" value="BHF-UCL"/>
</dbReference>
<dbReference type="GO" id="GO:0007405">
    <property type="term" value="P:neuroblast proliferation"/>
    <property type="evidence" value="ECO:0007669"/>
    <property type="project" value="Ensembl"/>
</dbReference>
<dbReference type="GO" id="GO:0050885">
    <property type="term" value="P:neuromuscular process controlling balance"/>
    <property type="evidence" value="ECO:0007669"/>
    <property type="project" value="Ensembl"/>
</dbReference>
<dbReference type="GO" id="GO:2000781">
    <property type="term" value="P:positive regulation of double-strand break repair"/>
    <property type="evidence" value="ECO:0000315"/>
    <property type="project" value="BHF-UCL"/>
</dbReference>
<dbReference type="GO" id="GO:1905168">
    <property type="term" value="P:positive regulation of double-strand break repair via homologous recombination"/>
    <property type="evidence" value="ECO:0000250"/>
    <property type="project" value="UniProtKB"/>
</dbReference>
<dbReference type="GO" id="GO:0032206">
    <property type="term" value="P:positive regulation of telomere maintenance"/>
    <property type="evidence" value="ECO:0000315"/>
    <property type="project" value="BHF-UCL"/>
</dbReference>
<dbReference type="GO" id="GO:0031848">
    <property type="term" value="P:protection from non-homologous end joining at telomere"/>
    <property type="evidence" value="ECO:0000314"/>
    <property type="project" value="UniProtKB"/>
</dbReference>
<dbReference type="GO" id="GO:0070534">
    <property type="term" value="P:protein K63-linked ubiquitination"/>
    <property type="evidence" value="ECO:0000250"/>
    <property type="project" value="UniProtKB"/>
</dbReference>
<dbReference type="GO" id="GO:1990166">
    <property type="term" value="P:protein localization to site of double-strand break"/>
    <property type="evidence" value="ECO:0000314"/>
    <property type="project" value="UniProtKB"/>
</dbReference>
<dbReference type="GO" id="GO:0062176">
    <property type="term" value="P:R-loop processing"/>
    <property type="evidence" value="ECO:0000314"/>
    <property type="project" value="UniProtKB"/>
</dbReference>
<dbReference type="GO" id="GO:0051726">
    <property type="term" value="P:regulation of cell cycle"/>
    <property type="evidence" value="ECO:0000304"/>
    <property type="project" value="UniProtKB"/>
</dbReference>
<dbReference type="GO" id="GO:0030174">
    <property type="term" value="P:regulation of DNA-templated DNA replication initiation"/>
    <property type="evidence" value="ECO:0000304"/>
    <property type="project" value="UniProtKB"/>
</dbReference>
<dbReference type="GO" id="GO:0090656">
    <property type="term" value="P:t-circle formation"/>
    <property type="evidence" value="ECO:0000315"/>
    <property type="project" value="BHF-UCL"/>
</dbReference>
<dbReference type="GO" id="GO:0000723">
    <property type="term" value="P:telomere maintenance"/>
    <property type="evidence" value="ECO:0000315"/>
    <property type="project" value="UniProtKB"/>
</dbReference>
<dbReference type="GO" id="GO:0043247">
    <property type="term" value="P:telomere maintenance in response to DNA damage"/>
    <property type="evidence" value="ECO:0000314"/>
    <property type="project" value="UniProtKB"/>
</dbReference>
<dbReference type="GO" id="GO:0090737">
    <property type="term" value="P:telomere maintenance via telomere trimming"/>
    <property type="evidence" value="ECO:0000316"/>
    <property type="project" value="BHF-UCL"/>
</dbReference>
<dbReference type="GO" id="GO:0031860">
    <property type="term" value="P:telomeric 3' overhang formation"/>
    <property type="evidence" value="ECO:0000315"/>
    <property type="project" value="BHF-UCL"/>
</dbReference>
<dbReference type="CDD" id="cd17741">
    <property type="entry name" value="BRCT_nibrin"/>
    <property type="match status" value="1"/>
</dbReference>
<dbReference type="CDD" id="cd22667">
    <property type="entry name" value="FHA_NBN"/>
    <property type="match status" value="1"/>
</dbReference>
<dbReference type="DisProt" id="DP02840"/>
<dbReference type="FunFam" id="2.60.200.20:FF:000017">
    <property type="entry name" value="Nibrin"/>
    <property type="match status" value="1"/>
</dbReference>
<dbReference type="FunFam" id="3.40.50.10190:FF:000024">
    <property type="entry name" value="Nibrin"/>
    <property type="match status" value="1"/>
</dbReference>
<dbReference type="FunFam" id="3.40.50.10980:FF:000001">
    <property type="entry name" value="Nibrin"/>
    <property type="match status" value="1"/>
</dbReference>
<dbReference type="Gene3D" id="2.60.200.20">
    <property type="match status" value="1"/>
</dbReference>
<dbReference type="Gene3D" id="3.40.50.10190">
    <property type="entry name" value="BRCT domain"/>
    <property type="match status" value="1"/>
</dbReference>
<dbReference type="Gene3D" id="3.40.50.10980">
    <property type="entry name" value="Nibrin, BRCT2 domain"/>
    <property type="match status" value="1"/>
</dbReference>
<dbReference type="InterPro" id="IPR001357">
    <property type="entry name" value="BRCT_dom"/>
</dbReference>
<dbReference type="InterPro" id="IPR036420">
    <property type="entry name" value="BRCT_dom_sf"/>
</dbReference>
<dbReference type="InterPro" id="IPR000253">
    <property type="entry name" value="FHA_dom"/>
</dbReference>
<dbReference type="InterPro" id="IPR040227">
    <property type="entry name" value="Nibrin-rel"/>
</dbReference>
<dbReference type="InterPro" id="IPR032429">
    <property type="entry name" value="Nibrin_BRCT2"/>
</dbReference>
<dbReference type="InterPro" id="IPR043014">
    <property type="entry name" value="Nibrin_BRCT2_sf"/>
</dbReference>
<dbReference type="InterPro" id="IPR013908">
    <property type="entry name" value="Nibrin_C"/>
</dbReference>
<dbReference type="InterPro" id="IPR016592">
    <property type="entry name" value="Nibrin_met"/>
</dbReference>
<dbReference type="InterPro" id="IPR008984">
    <property type="entry name" value="SMAD_FHA_dom_sf"/>
</dbReference>
<dbReference type="PANTHER" id="PTHR12162:SF0">
    <property type="entry name" value="NIBRIN"/>
    <property type="match status" value="1"/>
</dbReference>
<dbReference type="PANTHER" id="PTHR12162">
    <property type="entry name" value="NIBRIN-RELATED"/>
    <property type="match status" value="1"/>
</dbReference>
<dbReference type="Pfam" id="PF00533">
    <property type="entry name" value="BRCT"/>
    <property type="match status" value="1"/>
</dbReference>
<dbReference type="Pfam" id="PF00498">
    <property type="entry name" value="FHA"/>
    <property type="match status" value="1"/>
</dbReference>
<dbReference type="Pfam" id="PF08599">
    <property type="entry name" value="Nbs1_C"/>
    <property type="match status" value="1"/>
</dbReference>
<dbReference type="Pfam" id="PF16508">
    <property type="entry name" value="NIBRIN_BRCT_II"/>
    <property type="match status" value="1"/>
</dbReference>
<dbReference type="PIRSF" id="PIRSF011869">
    <property type="entry name" value="Nibrin_animal"/>
    <property type="match status" value="1"/>
</dbReference>
<dbReference type="SMART" id="SM00240">
    <property type="entry name" value="FHA"/>
    <property type="match status" value="1"/>
</dbReference>
<dbReference type="SMART" id="SM01348">
    <property type="entry name" value="Nbs1_C"/>
    <property type="match status" value="1"/>
</dbReference>
<dbReference type="SUPFAM" id="SSF52113">
    <property type="entry name" value="BRCT domain"/>
    <property type="match status" value="1"/>
</dbReference>
<dbReference type="SUPFAM" id="SSF49879">
    <property type="entry name" value="SMAD/FHA domain"/>
    <property type="match status" value="1"/>
</dbReference>
<dbReference type="PROSITE" id="PS50006">
    <property type="entry name" value="FHA_DOMAIN"/>
    <property type="match status" value="1"/>
</dbReference>
<name>NBN_HUMAN</name>
<accession>O60934</accession>
<accession>B2R626</accession>
<accession>B2RNC5</accession>
<accession>O60672</accession>
<accession>Q32NF7</accession>
<accession>Q53FM6</accession>
<accession>Q63HR6</accession>
<accession>Q7LDM2</accession>
<sequence>MWKLLPAAGPAGGEPYRLLTGVEYVVGRKNCAILIENDQSISRNHAVLTANFSVTNLSQTDEIPVLTLKDNSKYGTFVNEEKMQNGFSRTLKSGDGITFGVFGSKFRIEYEPLVACSSCLDVSGKTALNQAILQLGGFTVNNWTEECTHLVMVSVKVTIKTICALICGRPIVKPEYFTEFLKAVESKKQPPQIESFYPPLDEPSIGSKNVDLSGRQERKQIFKGKTFIFLNAKQHKKLSSAVVFGGGEARLITEENEEEHNFFLAPGTCVVDTGITNSQTLIPDCQKKWIQSIMDMLQRQGLRPIPEAEIGLAVIFMTTKNYCDPQGHPSTGLKTTTPGPSLSQGVSVDEKLMPSAPVNTTTYVADTESEQADTWDLSERPKEIKVSKMEQKFRMLSQDAPTVKESCKTSSNNNSMVSNTLAKMRIPNYQLSPTKLPSINKSKDRASQQQQTNSIRNYFQPSTKKRERDEENQEMSSCKSARIETSCSLLEQTQPATPSLWKNKEQHLSENEPVDTNSDNNLFTDTDLKSIVKNSASKSHAAEKLRSNKKREMDDVAIEDEVLEQLFKDTKPELEIDVKVQKQEEDVNVRKRPRMDIETNDTFSDEAVPESSKISQENEIGKKRELKEDSLWSAKEISNNDKLQDDSEMLPKKLLLTEFRSLVIKNSTSRNPSGINDDYGQLKNFKKFKKVTYPGAGKLPHIIGGSDLIAHHARKNTELEEWLRQEMEVQNQHAKEESLADDLFRYNPYLKRRR</sequence>
<evidence type="ECO:0000250" key="1">
    <source>
        <dbReference type="UniProtKB" id="Q9R207"/>
    </source>
</evidence>
<evidence type="ECO:0000255" key="2">
    <source>
        <dbReference type="PROSITE-ProRule" id="PRU00086"/>
    </source>
</evidence>
<evidence type="ECO:0000256" key="3">
    <source>
        <dbReference type="SAM" id="MobiDB-lite"/>
    </source>
</evidence>
<evidence type="ECO:0000269" key="4">
    <source>
    </source>
</evidence>
<evidence type="ECO:0000269" key="5">
    <source>
    </source>
</evidence>
<evidence type="ECO:0000269" key="6">
    <source>
    </source>
</evidence>
<evidence type="ECO:0000269" key="7">
    <source>
    </source>
</evidence>
<evidence type="ECO:0000269" key="8">
    <source>
    </source>
</evidence>
<evidence type="ECO:0000269" key="9">
    <source>
    </source>
</evidence>
<evidence type="ECO:0000269" key="10">
    <source>
    </source>
</evidence>
<evidence type="ECO:0000269" key="11">
    <source>
    </source>
</evidence>
<evidence type="ECO:0000269" key="12">
    <source>
    </source>
</evidence>
<evidence type="ECO:0000269" key="13">
    <source>
    </source>
</evidence>
<evidence type="ECO:0000269" key="14">
    <source>
    </source>
</evidence>
<evidence type="ECO:0000269" key="15">
    <source>
    </source>
</evidence>
<evidence type="ECO:0000269" key="16">
    <source>
    </source>
</evidence>
<evidence type="ECO:0000269" key="17">
    <source>
    </source>
</evidence>
<evidence type="ECO:0000269" key="18">
    <source>
    </source>
</evidence>
<evidence type="ECO:0000269" key="19">
    <source>
    </source>
</evidence>
<evidence type="ECO:0000269" key="20">
    <source>
    </source>
</evidence>
<evidence type="ECO:0000269" key="21">
    <source>
    </source>
</evidence>
<evidence type="ECO:0000269" key="22">
    <source>
    </source>
</evidence>
<evidence type="ECO:0000269" key="23">
    <source>
    </source>
</evidence>
<evidence type="ECO:0000269" key="24">
    <source>
    </source>
</evidence>
<evidence type="ECO:0000269" key="25">
    <source>
    </source>
</evidence>
<evidence type="ECO:0000269" key="26">
    <source>
    </source>
</evidence>
<evidence type="ECO:0000269" key="27">
    <source>
    </source>
</evidence>
<evidence type="ECO:0000269" key="28">
    <source>
    </source>
</evidence>
<evidence type="ECO:0000269" key="29">
    <source>
    </source>
</evidence>
<evidence type="ECO:0000269" key="30">
    <source>
    </source>
</evidence>
<evidence type="ECO:0000269" key="31">
    <source>
    </source>
</evidence>
<evidence type="ECO:0000269" key="32">
    <source>
    </source>
</evidence>
<evidence type="ECO:0000269" key="33">
    <source>
    </source>
</evidence>
<evidence type="ECO:0000269" key="34">
    <source>
    </source>
</evidence>
<evidence type="ECO:0000269" key="35">
    <source>
    </source>
</evidence>
<evidence type="ECO:0000269" key="36">
    <source>
    </source>
</evidence>
<evidence type="ECO:0000269" key="37">
    <source>
    </source>
</evidence>
<evidence type="ECO:0000269" key="38">
    <source>
    </source>
</evidence>
<evidence type="ECO:0000269" key="39">
    <source>
    </source>
</evidence>
<evidence type="ECO:0000269" key="40">
    <source>
    </source>
</evidence>
<evidence type="ECO:0000269" key="41">
    <source>
    </source>
</evidence>
<evidence type="ECO:0000269" key="42">
    <source>
    </source>
</evidence>
<evidence type="ECO:0000269" key="43">
    <source>
    </source>
</evidence>
<evidence type="ECO:0000269" key="44">
    <source>
    </source>
</evidence>
<evidence type="ECO:0000269" key="45">
    <source>
    </source>
</evidence>
<evidence type="ECO:0000269" key="46">
    <source>
    </source>
</evidence>
<evidence type="ECO:0000269" key="47">
    <source>
    </source>
</evidence>
<evidence type="ECO:0000269" key="48">
    <source>
    </source>
</evidence>
<evidence type="ECO:0000269" key="49">
    <source>
    </source>
</evidence>
<evidence type="ECO:0000269" key="50">
    <source>
    </source>
</evidence>
<evidence type="ECO:0000269" key="51">
    <source>
    </source>
</evidence>
<evidence type="ECO:0000269" key="52">
    <source>
    </source>
</evidence>
<evidence type="ECO:0000269" key="53">
    <source>
    </source>
</evidence>
<evidence type="ECO:0000269" key="54">
    <source>
    </source>
</evidence>
<evidence type="ECO:0000269" key="55">
    <source>
    </source>
</evidence>
<evidence type="ECO:0000269" key="56">
    <source>
    </source>
</evidence>
<evidence type="ECO:0000269" key="57">
    <source>
    </source>
</evidence>
<evidence type="ECO:0000269" key="58">
    <source ref="7"/>
</evidence>
<evidence type="ECO:0000303" key="59">
    <source>
    </source>
</evidence>
<evidence type="ECO:0000303" key="60">
    <source>
    </source>
</evidence>
<evidence type="ECO:0000303" key="61">
    <source>
    </source>
</evidence>
<evidence type="ECO:0000305" key="62"/>
<evidence type="ECO:0000305" key="63">
    <source>
    </source>
</evidence>
<evidence type="ECO:0000312" key="64">
    <source>
        <dbReference type="HGNC" id="HGNC:7652"/>
    </source>
</evidence>
<evidence type="ECO:0007744" key="65">
    <source>
        <dbReference type="PDB" id="5WQD"/>
    </source>
</evidence>
<evidence type="ECO:0007744" key="66">
    <source>
        <dbReference type="PDB" id="7SID"/>
    </source>
</evidence>
<evidence type="ECO:0007744" key="67">
    <source>
        <dbReference type="PDB" id="8BAH"/>
    </source>
</evidence>
<evidence type="ECO:0007744" key="68">
    <source>
    </source>
</evidence>
<evidence type="ECO:0007744" key="69">
    <source>
    </source>
</evidence>
<evidence type="ECO:0007744" key="70">
    <source>
    </source>
</evidence>
<evidence type="ECO:0007744" key="71">
    <source>
    </source>
</evidence>
<evidence type="ECO:0007744" key="72">
    <source>
    </source>
</evidence>
<evidence type="ECO:0007744" key="73">
    <source>
    </source>
</evidence>
<evidence type="ECO:0007744" key="74">
    <source>
    </source>
</evidence>
<evidence type="ECO:0007829" key="75">
    <source>
        <dbReference type="PDB" id="5WQD"/>
    </source>
</evidence>
<evidence type="ECO:0007829" key="76">
    <source>
        <dbReference type="PDB" id="7SID"/>
    </source>
</evidence>
<keyword id="KW-0002">3D-structure</keyword>
<keyword id="KW-0131">Cell cycle</keyword>
<keyword id="KW-0158">Chromosome</keyword>
<keyword id="KW-0903">Direct protein sequencing</keyword>
<keyword id="KW-0225">Disease variant</keyword>
<keyword id="KW-0227">DNA damage</keyword>
<keyword id="KW-0234">DNA repair</keyword>
<keyword id="KW-0945">Host-virus interaction</keyword>
<keyword id="KW-1017">Isopeptide bond</keyword>
<keyword id="KW-0469">Meiosis</keyword>
<keyword id="KW-0539">Nucleus</keyword>
<keyword id="KW-0597">Phosphoprotein</keyword>
<keyword id="KW-1267">Proteomics identification</keyword>
<keyword id="KW-1185">Reference proteome</keyword>
<keyword id="KW-0779">Telomere</keyword>
<keyword id="KW-0832">Ubl conjugation</keyword>